<accession>O95278</accession>
<accession>B3KMU5</accession>
<accession>B4DRZ2</accession>
<accession>O95483</accession>
<accession>Q5T3F5</accession>
<accession>Q6IS15</accession>
<accession>Q8IU96</accession>
<accession>Q8IX24</accession>
<accession>Q8IX25</accession>
<accession>Q9BS66</accession>
<accession>Q9UEN2</accession>
<feature type="chain" id="PRO_0000094838" description="Laforin">
    <location>
        <begin position="1"/>
        <end position="331"/>
    </location>
</feature>
<feature type="domain" description="CBM20" evidence="3">
    <location>
        <begin position="1"/>
        <end position="124"/>
    </location>
</feature>
<feature type="domain" description="Tyrosine-protein phosphatase" evidence="2">
    <location>
        <begin position="156"/>
        <end position="323"/>
    </location>
</feature>
<feature type="short sequence motif" description="Glucan phosphatase signature motif CXAGXGR" evidence="60 61">
    <location>
        <begin position="266"/>
        <end position="272"/>
    </location>
</feature>
<feature type="active site" description="Phosphocysteine intermediate" evidence="2 55 56 57 58 59 60">
    <location>
        <position position="266"/>
    </location>
</feature>
<feature type="binding site" evidence="37 63">
    <location>
        <position position="32"/>
    </location>
    <ligand>
        <name>substrate</name>
    </ligand>
</feature>
<feature type="binding site" evidence="37 63">
    <location>
        <position position="87"/>
    </location>
    <ligand>
        <name>substrate</name>
    </ligand>
</feature>
<feature type="binding site" evidence="37 63">
    <location>
        <begin position="103"/>
        <end position="107"/>
    </location>
    <ligand>
        <name>substrate</name>
    </ligand>
</feature>
<feature type="binding site" evidence="37 63">
    <location>
        <position position="197"/>
    </location>
    <ligand>
        <name>substrate</name>
    </ligand>
</feature>
<feature type="binding site" evidence="37 63">
    <location>
        <position position="235"/>
    </location>
    <ligand>
        <name>substrate</name>
    </ligand>
</feature>
<feature type="binding site" evidence="37 63">
    <location>
        <position position="241"/>
    </location>
    <ligand>
        <name>substrate</name>
    </ligand>
</feature>
<feature type="binding site" evidence="37 63">
    <location>
        <begin position="267"/>
        <end position="272"/>
    </location>
    <ligand>
        <name>substrate</name>
    </ligand>
</feature>
<feature type="binding site" evidence="37 63">
    <location>
        <position position="304"/>
    </location>
    <ligand>
        <name>substrate</name>
    </ligand>
</feature>
<feature type="site" description="Required for homodimerization" evidence="35">
    <location>
        <position position="329"/>
    </location>
</feature>
<feature type="modified residue" description="Phosphoserine; by AMPK" evidence="31">
    <location>
        <position position="25"/>
    </location>
</feature>
<feature type="splice variant" id="VSP_042494" description="In isoform 6." evidence="45">
    <location>
        <begin position="1"/>
        <end position="243"/>
    </location>
</feature>
<feature type="splice variant" id="VSP_042495" description="In isoform 7." evidence="44">
    <original>MRFRFGVVVPPAVAGARPELLVVGSRPELGRWEPRGAVRLRPAGTAAGDGALALQEPGLWLGEVELAAEEAAQDGAEPGRVDTFWYKFLKREPGGELSWEGNGPHHDRCCTYNENNLVDGVYCLPIGHWIEATGHTNEMKHTTDFYFNIAGHQAMHYSR</original>
    <variation>MIFNK</variation>
    <location>
        <begin position="1"/>
        <end position="159"/>
    </location>
</feature>
<feature type="splice variant" id="VSP_042493" description="In isoform 8." evidence="44 52">
    <location>
        <begin position="1"/>
        <end position="138"/>
    </location>
</feature>
<feature type="splice variant" id="VSP_011015" description="In isoform 4." evidence="52">
    <original>NGPHHDRCCTYNENNLVDGVYCLPIGHWIEATGHTNEMKHTTDFYFNIAGHQAMHYSRILPNIWLGSCPRQVEHVTIKLKHELGITAVMNFQTEWDIV</original>
    <variation>IASRRLPPAQSGSSGPHPQPGPRPRAGPAGPGGARPGLFARVPAHSPGDLG</variation>
    <location>
        <begin position="102"/>
        <end position="199"/>
    </location>
</feature>
<feature type="splice variant" id="VSP_042496" description="In isoform 5." evidence="53">
    <location>
        <begin position="160"/>
        <end position="293"/>
    </location>
</feature>
<feature type="splice variant" id="VSP_011016" description="In isoform 4." evidence="52">
    <location>
        <begin position="200"/>
        <end position="331"/>
    </location>
</feature>
<feature type="splice variant" id="VSP_042497" description="In isoform 5." evidence="53">
    <original>YFLMAKRPAVYIDEEALARAQEDFFQKFGKVRSSVCSL</original>
    <variation>PSTDAAPGGVPAACAAGEGTHRVRALQRWGGPLHRGCLRLAPVCDGLESEEGAVFPHGQEAGCLH</variation>
    <location>
        <begin position="294"/>
        <end position="331"/>
    </location>
</feature>
<feature type="splice variant" id="VSP_011017" description="In isoform 2." evidence="50 51">
    <original>LARAQEDFFQK</original>
    <variation>ASQDTFPL</variation>
    <location>
        <begin position="310"/>
        <end position="320"/>
    </location>
</feature>
<feature type="splice variant" id="VSP_011018" description="In isoform 2." evidence="50 51">
    <location>
        <begin position="321"/>
        <end position="331"/>
    </location>
</feature>
<feature type="sequence variant" id="VAR_019465" description="In MELF1; atypical form; does not affect glycogen binding." evidence="11 16">
    <original>S</original>
    <variation>P</variation>
    <location>
        <position position="25"/>
    </location>
</feature>
<feature type="sequence variant" id="VAR_019466" description="In MELF1; does not affect glycogen binding; dbSNP:rs1776816199." evidence="16">
    <original>E</original>
    <variation>K</variation>
    <location>
        <position position="28"/>
    </location>
</feature>
<feature type="sequence variant" id="VAR_019467" description="In MELF1; impairs protein stability; affects phosphatase activity; abolishes glycogen binding; abolishes phosphatase activity with insoluble glucan; disrupts the interaction with PPP1R3C; dbSNP:rs104893955." evidence="9 11 15 16 37 38">
    <original>W</original>
    <variation>G</variation>
    <location>
        <position position="32"/>
    </location>
</feature>
<feature type="sequence variant" id="VAR_019468" description="Does not affect glycogen binding; dbSNP:rs374338349." evidence="8 16 21">
    <original>A</original>
    <variation>P</variation>
    <location>
        <position position="46"/>
    </location>
</feature>
<feature type="sequence variant" id="VAR_019469" description="In MELF1; affects phosphatase activity and glycogen binding; disrupts the interaction with PPP1R3C; dbSNP:rs1362231306." evidence="6 15">
    <original>F</original>
    <variation>L</variation>
    <location>
        <position position="84"/>
    </location>
</feature>
<feature type="sequence variant" id="VAR_019470" description="In MELF1; does not affect glycogen binding; dbSNP:rs1034706422 and dbSNP:rs1463000703." evidence="16">
    <original>F</original>
    <variation>L</variation>
    <location>
        <position position="88"/>
    </location>
</feature>
<feature type="sequence variant" id="VAR_019471" description="In MELF1; atypical form; learning difficuties with childhood-onset." evidence="17 18">
    <original>R</original>
    <variation>P</variation>
    <location>
        <position position="91"/>
    </location>
</feature>
<feature type="sequence variant" id="VAR_019472" description="In MELF1; loss of phosphatase activity; reduced self-interaction capacity; disrupts the interaction with PPP1R3C; dbSNP:rs137852915." evidence="11 15 39">
    <original>R</original>
    <variation>C</variation>
    <location>
        <position position="108"/>
    </location>
</feature>
<feature type="sequence variant" id="VAR_019473" evidence="39">
    <original>E</original>
    <variation>D</variation>
    <location>
        <position position="114"/>
    </location>
</feature>
<feature type="sequence variant" id="VAR_046383" description="In MELF1." evidence="26">
    <original>K</original>
    <variation>N</variation>
    <location>
        <position position="140"/>
    </location>
</feature>
<feature type="sequence variant" id="VAR_046384" description="In MELF1." evidence="26">
    <original>N</original>
    <variation>Y</variation>
    <location>
        <position position="148"/>
    </location>
</feature>
<feature type="sequence variant" id="VAR_019474" description="In MELF1; results in ubiquitin-positive perinuclear aggregates; no effect on glycogen binding; abolishes phosphatase activity; may affect proper folding; dbSNP:rs137852916." evidence="5 11 17 37 40">
    <original>R</original>
    <variation>H</variation>
    <location>
        <position position="171"/>
    </location>
</feature>
<feature type="sequence variant" id="VAR_019475" description="In MELF1; abolishes interaction with NHLRC1." evidence="12">
    <original>T</original>
    <variation>A</variation>
    <location>
        <position position="187"/>
    </location>
</feature>
<feature type="sequence variant" id="VAR_019476" description="In MELF1; results in ubiquitin-positive perinuclear aggregates; loss of phosphatase activity; affects glycogen binding; reduced self-interaction capacity; abolishes interaction with NHLRC1, PPP1R3C and PRKAA2; no effect on phosphorylation of protein; dbSNP:rs375544596." evidence="11 15 40">
    <original>T</original>
    <variation>I</variation>
    <location>
        <position position="194"/>
    </location>
</feature>
<feature type="sequence variant" id="VAR_046385" description="In MELF1." evidence="26">
    <original>E</original>
    <variation>K</variation>
    <location>
        <position position="210"/>
    </location>
</feature>
<feature type="sequence variant" id="VAR_019477" description="In MELF1; impaired phosphatase activity; does not affect glycogen binding; disrupts the interaction with PPP1R3C." evidence="6 15 37">
    <original>G</original>
    <variation>S</variation>
    <location>
        <position position="240"/>
    </location>
</feature>
<feature type="sequence variant" id="VAR_019478" description="In MELF1; results in ubiquitin-positive perinuclear aggregates; loss of phosphatase activity; affects glycogen binding; disrupts the interaction with PPP1R3C; dbSNP:rs137852917." evidence="11 15 17 39 40">
    <original>G</original>
    <variation>S</variation>
    <location>
        <position position="279"/>
    </location>
</feature>
<feature type="sequence variant" id="VAR_019479" description="In MELF1; results in ubiquitin-positive perinuclear aggregates; may affect proper folding; loss of phosphatase activity; affects glycogen binding; disrupts the interaction with PPP1R3C; dbSNP:rs796052427." evidence="5 11 15 39">
    <original>Q</original>
    <variation>L</variation>
    <location>
        <position position="293"/>
    </location>
</feature>
<feature type="sequence variant" id="VAR_019480" description="In MELF1; results in ubiquitin-positive perinuclear aggregates; impairs phosphatase activity; affects glycogen binding; disrupts the interaction with PPP1R3C." evidence="11 15 37 40">
    <original>Y</original>
    <variation>N</variation>
    <location>
        <position position="294"/>
    </location>
</feature>
<feature type="sequence variant" id="VAR_019481" description="In MELF1; impairs protein stability; impairs phosphatase activity; affects glycogen binding; disrupts the interaction with PPP1R3C; dbSNP:rs796052428." evidence="6 15 37">
    <original>P</original>
    <variation>L</variation>
    <location>
        <position position="301"/>
    </location>
</feature>
<feature type="sequence variant" id="VAR_046386" description="In MELF1; causes location of isoform 1 at cytoplasmic punctae; does not affect homodimerization of isoform 1 but prevents heterodimerization of isoform 1 and isoform 2." evidence="26">
    <original>L</original>
    <variation>W</variation>
    <location>
        <position position="310"/>
    </location>
</feature>
<feature type="mutagenesis site" description="Loss of phosphatase activity. No effect on glycogen binding." evidence="37">
    <original>V</original>
    <variation>A</variation>
    <location>
        <position position="8"/>
    </location>
</feature>
<feature type="mutagenesis site" description="Partial loss of phosphatase activity. Abolishes homodimerization. Abolishes interaction with NHLRC1, PPP1R3C and PRKAA2. Does not affect glycogen binding. Reduces stability of the protein." evidence="31">
    <original>S</original>
    <variation>A</variation>
    <location>
        <position position="25"/>
    </location>
</feature>
<feature type="mutagenesis site" description="Partial loss of phosphatase activity. Increases interaction with NHLRC1. Does not affect interaction with NHLRC1, PPP1R3C or PRKAA2. Does not affect binding to carbohydrate. Does not affect homodimerization." evidence="31">
    <original>S</original>
    <variation>D</variation>
    <location>
        <position position="25"/>
    </location>
</feature>
<feature type="mutagenesis site" description="Loss of phosphatase activity. Abolishes glycogen binding." evidence="9 37">
    <original>K</original>
    <variation>A</variation>
    <location>
        <position position="87"/>
    </location>
</feature>
<feature type="mutagenesis site" description="Strongly reduces phosphatase activity. Strongly reduces glycogen binding." evidence="37">
    <original>W</original>
    <variation>A</variation>
    <location>
        <position position="99"/>
    </location>
</feature>
<feature type="mutagenesis site" description="No effect on homodimerization or carbohydrate binding. Decreased phosphatase activity." evidence="35">
    <original>CC</original>
    <variation>SS</variation>
    <location>
        <begin position="109"/>
        <end position="110"/>
    </location>
</feature>
<feature type="mutagenesis site" description="No effect on homodimerization or carbohydrate binding. Decreased phosphatase activity." evidence="35">
    <original>C</original>
    <variation>S</variation>
    <location>
        <position position="123"/>
    </location>
</feature>
<feature type="mutagenesis site" description="Strongly decreased phosphatase activity. No effect on glycogen binding." evidence="37">
    <original>I</original>
    <variation>T</variation>
    <location>
        <position position="126"/>
    </location>
</feature>
<feature type="mutagenesis site" description="Strongly decreased phosphatase activity. No effect on glycogen binding." evidence="37">
    <original>T</original>
    <variation>A</variation>
    <location>
        <position position="142"/>
    </location>
</feature>
<feature type="mutagenesis site" description="Abolishes interaction with NHLRC1." evidence="31">
    <original>S</original>
    <variation>A</variation>
    <variation>D</variation>
    <location>
        <position position="168"/>
    </location>
</feature>
<feature type="mutagenesis site" description="No effect on homodimerization or carbohydrate binding. Decreased phosphatase activity." evidence="35">
    <original>C</original>
    <variation>S</variation>
    <location>
        <position position="169"/>
    </location>
</feature>
<feature type="mutagenesis site" description="No effect on phosphatase activity." evidence="36">
    <original>C</original>
    <variation>S</variation>
    <location>
        <position position="169"/>
    </location>
</feature>
<feature type="mutagenesis site" description="No effect on phosphatase activity." evidence="36">
    <original>R</original>
    <variation>A</variation>
    <location>
        <position position="171"/>
    </location>
</feature>
<feature type="mutagenesis site" description="Abolishes interaction with NHLRC1." evidence="31">
    <original>T</original>
    <variation>D</variation>
    <location>
        <position position="187"/>
    </location>
</feature>
<feature type="mutagenesis site" description="Does not affect interaction with NHLRC1, PPP1R3C or PRKAA2." evidence="31">
    <original>T</original>
    <variation>D</variation>
    <location>
        <position position="194"/>
    </location>
</feature>
<feature type="mutagenesis site" description="Strongly decreased phosphatase activity. No effect on glycogen binding." evidence="36 37">
    <original>D</original>
    <variation>A</variation>
    <location>
        <position position="197"/>
    </location>
</feature>
<feature type="mutagenesis site" description="No effect on homodimerization or carbohydrate binding. Decreased phosphatase activity." evidence="35">
    <original>C</original>
    <variation>S</variation>
    <location>
        <position position="205"/>
    </location>
</feature>
<feature type="mutagenesis site" description="Complete loss of phosphatase activity. Does not affect glycogen binding." evidence="15 36">
    <original>D</original>
    <variation>A</variation>
    <location>
        <position position="235"/>
    </location>
</feature>
<feature type="mutagenesis site" description="Complete loss of phosphatase activity. No effect on glycogen binding." evidence="37">
    <original>M</original>
    <variation>A</variation>
    <location>
        <position position="236"/>
    </location>
</feature>
<feature type="mutagenesis site" description="No effect on homodimerization or carbohydrate binding. Decreased phosphatase activity." evidence="35">
    <original>C</original>
    <variation>S</variation>
    <location>
        <position position="250"/>
    </location>
</feature>
<feature type="mutagenesis site" description="Impairs protein stability. Strongly reduces phosphatase activity. No effect on glycogen binding." evidence="37">
    <original>L</original>
    <variation>A</variation>
    <location>
        <position position="251"/>
    </location>
</feature>
<feature type="mutagenesis site" description="Complete loss of phosphatase activity. Does not affect glycogen binding. Does not affect self-interaction. Increases the interaction with PPP1R3C." evidence="7 9 15 32 35 36 37">
    <original>C</original>
    <variation>S</variation>
    <location>
        <position position="266"/>
    </location>
</feature>
<feature type="mutagenesis site" description="Complete loss of phosphatase activity." evidence="36">
    <original>R</original>
    <variation>A</variation>
    <location>
        <position position="272"/>
    </location>
</feature>
<feature type="mutagenesis site" description="Impairs protein stability. Strongly reduces phosphatase activity. No effect on glycogen binding." evidence="37">
    <original>F</original>
    <variation>S</variation>
    <location>
        <position position="321"/>
    </location>
</feature>
<feature type="mutagenesis site" description="Fails to homodimerize. Does not affect carbohydrate binding or phosphatase activity." evidence="35">
    <location>
        <begin position="329"/>
        <end position="331"/>
    </location>
</feature>
<feature type="mutagenesis site" description="Fails to homodimerize. Does not affect carbohydrate binding, interaction with NHLRC1, phosphatase activity, or ubiquitination by NHLRC1." evidence="35">
    <original>C</original>
    <variation>S</variation>
    <location>
        <position position="329"/>
    </location>
</feature>
<feature type="mutagenesis site" description="No effect on homodimerization." evidence="36">
    <original>C</original>
    <variation>S</variation>
    <location>
        <position position="329"/>
    </location>
</feature>
<feature type="sequence conflict" description="In Ref. 8; AAH70047." evidence="53" ref="8">
    <original>Q</original>
    <variation>K</variation>
    <location>
        <position position="193"/>
    </location>
</feature>
<feature type="sequence conflict" description="In Ref. 4; AAO15523." evidence="53" ref="4">
    <original>A</original>
    <variation>P</variation>
    <location>
        <position position="248"/>
    </location>
</feature>
<feature type="sequence conflict" description="In Ref. 5; BAG61454." evidence="53" ref="5">
    <original>K</original>
    <variation>E</variation>
    <location>
        <position position="258"/>
    </location>
</feature>
<feature type="sequence conflict" description="In Ref. 5; BAG61454." evidence="53" ref="5">
    <original>Y</original>
    <variation>H</variation>
    <location>
        <position position="294"/>
    </location>
</feature>
<feature type="strand" evidence="65">
    <location>
        <begin position="1"/>
        <end position="9"/>
    </location>
</feature>
<feature type="helix" evidence="65">
    <location>
        <begin position="11"/>
        <end position="14"/>
    </location>
</feature>
<feature type="strand" evidence="65">
    <location>
        <begin position="19"/>
        <end position="26"/>
    </location>
</feature>
<feature type="helix" evidence="65">
    <location>
        <begin position="27"/>
        <end position="29"/>
    </location>
</feature>
<feature type="turn" evidence="65">
    <location>
        <begin position="30"/>
        <end position="32"/>
    </location>
</feature>
<feature type="helix" evidence="65">
    <location>
        <begin position="34"/>
        <end position="36"/>
    </location>
</feature>
<feature type="strand" evidence="65">
    <location>
        <begin position="58"/>
        <end position="67"/>
    </location>
</feature>
<feature type="strand" evidence="65">
    <location>
        <begin position="84"/>
        <end position="91"/>
    </location>
</feature>
<feature type="strand" evidence="65">
    <location>
        <begin position="97"/>
        <end position="103"/>
    </location>
</feature>
<feature type="helix" evidence="65">
    <location>
        <begin position="104"/>
        <end position="106"/>
    </location>
</feature>
<feature type="strand" evidence="65">
    <location>
        <begin position="108"/>
        <end position="110"/>
    </location>
</feature>
<feature type="helix" evidence="65">
    <location>
        <begin position="114"/>
        <end position="116"/>
    </location>
</feature>
<feature type="strand" evidence="65">
    <location>
        <begin position="121"/>
        <end position="123"/>
    </location>
</feature>
<feature type="helix" evidence="65">
    <location>
        <begin position="138"/>
        <end position="151"/>
    </location>
</feature>
<feature type="strand" evidence="64">
    <location>
        <begin position="157"/>
        <end position="161"/>
    </location>
</feature>
<feature type="strand" evidence="64">
    <location>
        <begin position="164"/>
        <end position="167"/>
    </location>
</feature>
<feature type="helix" evidence="64">
    <location>
        <begin position="173"/>
        <end position="177"/>
    </location>
</feature>
<feature type="helix" evidence="64">
    <location>
        <begin position="178"/>
        <end position="183"/>
    </location>
</feature>
<feature type="strand" evidence="64">
    <location>
        <begin position="188"/>
        <end position="191"/>
    </location>
</feature>
<feature type="helix" evidence="64">
    <location>
        <begin position="195"/>
        <end position="201"/>
    </location>
</feature>
<feature type="helix" evidence="64">
    <location>
        <begin position="203"/>
        <end position="205"/>
    </location>
</feature>
<feature type="strand" evidence="64">
    <location>
        <begin position="208"/>
        <end position="210"/>
    </location>
</feature>
<feature type="helix" evidence="64">
    <location>
        <begin position="214"/>
        <end position="223"/>
    </location>
</feature>
<feature type="strand" evidence="64">
    <location>
        <begin position="227"/>
        <end position="230"/>
    </location>
</feature>
<feature type="helix" evidence="64">
    <location>
        <begin position="238"/>
        <end position="258"/>
    </location>
</feature>
<feature type="strand" evidence="64">
    <location>
        <begin position="262"/>
        <end position="265"/>
    </location>
</feature>
<feature type="helix" evidence="64">
    <location>
        <begin position="271"/>
        <end position="283"/>
    </location>
</feature>
<feature type="helix" evidence="64">
    <location>
        <begin position="289"/>
        <end position="296"/>
    </location>
</feature>
<feature type="strand" evidence="64">
    <location>
        <begin position="303"/>
        <end position="305"/>
    </location>
</feature>
<feature type="helix" evidence="64">
    <location>
        <begin position="307"/>
        <end position="321"/>
    </location>
</feature>
<protein>
    <recommendedName>
        <fullName evidence="41">Laforin</fullName>
        <ecNumber evidence="22 35 36 37 38">3.1.3.-</ecNumber>
        <ecNumber evidence="54">3.1.3.16</ecNumber>
        <ecNumber evidence="5 7">3.1.3.48</ecNumber>
    </recommendedName>
    <alternativeName>
        <fullName evidence="46 48">Glucan phosphatase</fullName>
    </alternativeName>
    <alternativeName>
        <fullName evidence="48 49">Glycogen phosphatase</fullName>
    </alternativeName>
    <alternativeName>
        <fullName>Lafora PTPase</fullName>
        <shortName evidence="42">LAFPTPase</shortName>
    </alternativeName>
</protein>
<organism>
    <name type="scientific">Homo sapiens</name>
    <name type="common">Human</name>
    <dbReference type="NCBI Taxonomy" id="9606"/>
    <lineage>
        <taxon>Eukaryota</taxon>
        <taxon>Metazoa</taxon>
        <taxon>Chordata</taxon>
        <taxon>Craniata</taxon>
        <taxon>Vertebrata</taxon>
        <taxon>Euteleostomi</taxon>
        <taxon>Mammalia</taxon>
        <taxon>Eutheria</taxon>
        <taxon>Euarchontoglires</taxon>
        <taxon>Primates</taxon>
        <taxon>Haplorrhini</taxon>
        <taxon>Catarrhini</taxon>
        <taxon>Hominidae</taxon>
        <taxon>Homo</taxon>
    </lineage>
</organism>
<keyword id="KW-0002">3D-structure</keyword>
<keyword id="KW-0024">Alternative initiation</keyword>
<keyword id="KW-0025">Alternative splicing</keyword>
<keyword id="KW-0072">Autophagy</keyword>
<keyword id="KW-0119">Carbohydrate metabolism</keyword>
<keyword id="KW-1003">Cell membrane</keyword>
<keyword id="KW-0963">Cytoplasm</keyword>
<keyword id="KW-0225">Disease variant</keyword>
<keyword id="KW-0256">Endoplasmic reticulum</keyword>
<keyword id="KW-0887">Epilepsy</keyword>
<keyword id="KW-0321">Glycogen metabolism</keyword>
<keyword id="KW-0322">Glycogen storage disease</keyword>
<keyword id="KW-0378">Hydrolase</keyword>
<keyword id="KW-0472">Membrane</keyword>
<keyword id="KW-0523">Neurodegeneration</keyword>
<keyword id="KW-0539">Nucleus</keyword>
<keyword id="KW-0597">Phosphoprotein</keyword>
<keyword id="KW-0904">Protein phosphatase</keyword>
<keyword id="KW-1267">Proteomics identification</keyword>
<keyword id="KW-1185">Reference proteome</keyword>
<keyword id="KW-0832">Ubl conjugation</keyword>
<sequence>MRFRFGVVVPPAVAGARPELLVVGSRPELGRWEPRGAVRLRPAGTAAGDGALALQEPGLWLGEVELAAEEAAQDGAEPGRVDTFWYKFLKREPGGELSWEGNGPHHDRCCTYNENNLVDGVYCLPIGHWIEATGHTNEMKHTTDFYFNIAGHQAMHYSRILPNIWLGSCPRQVEHVTIKLKHELGITAVMNFQTEWDIVQNSSGCNRYPEPMTPDTMIKLYREEGLAYIWMPTPDMSTEGRVQMLPQAVCLLHALLEKGHIVYVHCNAGVGRSTAAVCGWLQYVMGWNLRKVQYFLMAKRPAVYIDEEALARAQEDFFQKFGKVRSSVCSL</sequence>
<name>EPM2A_HUMAN</name>
<comment type="function">
    <text evidence="1 5 7 9 15 17 22 23 25 27 28 30 32 34 35 36 37 38">Plays an important role in preventing glycogen hyperphosphorylation and the formation of insoluble aggregates, via its activity as glycogen phosphatase, and by promoting the ubiquitination of proteins involved in glycogen metabolism via its interaction with the E3 ubiquitin ligase NHLRC1/malin. Shows strong phosphatase activity towards complex carbohydrates in vitro, avoiding glycogen hyperphosphorylation which is associated with reduced branching and formation of insoluble aggregates (PubMed:16901901, PubMed:23922729, PubMed:25538239, PubMed:25544560, PubMed:26231210). Dephosphorylates phosphotyrosine and synthetic substrates, such as para-nitrophenylphosphate (pNPP), and has low activity with phosphoserine and phosphothreonine substrates (in vitro) (PubMed:11001928, PubMed:11220751, PubMed:11739371, PubMed:14532330, PubMed:14722920, PubMed:16971387, PubMed:18617530, PubMed:22036712, PubMed:23922729). Has been shown to dephosphorylate MAPT (By similarity). Forms a complex with NHLRC1/malin and HSP70, which suppresses the cellular toxicity of misfolded proteins by promoting their degradation through the ubiquitin-proteasome system (UPS). Acts as a scaffold protein to facilitate PPP1R3C/PTG ubiquitination by NHLRC1/malin (PubMed:23922729). Also promotes proteasome-independent protein degradation through the macroautophagy pathway (PubMed:20453062).</text>
</comment>
<comment type="function">
    <molecule>Isoform 2</molecule>
    <text evidence="27 32">Does not bind to glycogen (PubMed:18617530). Lacks phosphatase activity and might function as a dominant-negative regulator for the phosphatase activity of isoform 1 and isoform 7 (PubMed:18617530, PubMed:22036712).</text>
</comment>
<comment type="function">
    <molecule>Isoform 7</molecule>
    <text evidence="32">Has phosphatase activity (in vitro).</text>
</comment>
<comment type="catalytic activity">
    <reaction evidence="4 5 7">
        <text>O-phospho-L-tyrosyl-[protein] + H2O = L-tyrosyl-[protein] + phosphate</text>
        <dbReference type="Rhea" id="RHEA:10684"/>
        <dbReference type="Rhea" id="RHEA-COMP:10136"/>
        <dbReference type="Rhea" id="RHEA-COMP:20101"/>
        <dbReference type="ChEBI" id="CHEBI:15377"/>
        <dbReference type="ChEBI" id="CHEBI:43474"/>
        <dbReference type="ChEBI" id="CHEBI:46858"/>
        <dbReference type="ChEBI" id="CHEBI:61978"/>
        <dbReference type="EC" id="3.1.3.48"/>
    </reaction>
</comment>
<comment type="catalytic activity">
    <reaction evidence="54">
        <text>O-phospho-L-seryl-[protein] + H2O = L-seryl-[protein] + phosphate</text>
        <dbReference type="Rhea" id="RHEA:20629"/>
        <dbReference type="Rhea" id="RHEA-COMP:9863"/>
        <dbReference type="Rhea" id="RHEA-COMP:11604"/>
        <dbReference type="ChEBI" id="CHEBI:15377"/>
        <dbReference type="ChEBI" id="CHEBI:29999"/>
        <dbReference type="ChEBI" id="CHEBI:43474"/>
        <dbReference type="ChEBI" id="CHEBI:83421"/>
        <dbReference type="EC" id="3.1.3.16"/>
    </reaction>
</comment>
<comment type="catalytic activity">
    <reaction evidence="54">
        <text>O-phospho-L-threonyl-[protein] + H2O = L-threonyl-[protein] + phosphate</text>
        <dbReference type="Rhea" id="RHEA:47004"/>
        <dbReference type="Rhea" id="RHEA-COMP:11060"/>
        <dbReference type="Rhea" id="RHEA-COMP:11605"/>
        <dbReference type="ChEBI" id="CHEBI:15377"/>
        <dbReference type="ChEBI" id="CHEBI:30013"/>
        <dbReference type="ChEBI" id="CHEBI:43474"/>
        <dbReference type="ChEBI" id="CHEBI:61977"/>
        <dbReference type="EC" id="3.1.3.16"/>
    </reaction>
</comment>
<comment type="subunit">
    <text evidence="9 13 14 15 16 19 20 22 23 25 27 29 32 33 34 35 36 37">Homodimer (PubMed:16971387, PubMed:18617530, PubMed:23922729, PubMed:25538239, PubMed:25544560). Interacts with itself (PubMed:14532330). Interacts with PPP1R3B, PPP1R3C, PPP1R3D, HIRIP5, and EPM2AIP1 (PubMed:12782127, PubMed:12915448, PubMed:14532330, PubMed:16901901, PubMed:18070875). Binds glycogen and Lafora bodies (PubMed:11739371, PubMed:14532330, PubMed:14706656, PubMed:15102711, PubMed:18617530, PubMed:22036712). Interacts with NHLRC1/malin (via the NHL repeats) (PubMed:15930137, PubMed:22036712, PubMed:23922729). Forms a complex with NHLRC1/malin and HSP70 (PubMed:19036738). Interacts with PPP1R3D; in the presence of NHLC1/malin the interaction leads to ubiquitination and autophagic degradation of PPP1R3D. Interacts (via the phosphatase domain) with MAPT/Tau; the interaction dephosphorylates MAPT (PubMed:19542233). Isoform 1 and isoform 2 interact to form a heterodimeric complex that lacks phosphatase activity (in vitro) (PubMed:18617530). Active phosphatase isoform 7 and isoform 1 interact with each other, but give rise to lower phosphatase activity than isoform 1 or isoform 7 by themselves (in vitro) (PubMed:22036712). Active phosphatase isoform 7 and inactive isoform 2 interact with each other, but give rise to lower phosphatase activity than isoform 7 by itself (in vitro) (PubMed:22036712). Interacts with PRDM8 (PubMed:22961547).</text>
</comment>
<comment type="interaction">
    <interactant intactId="EBI-2506661">
        <id>O95278</id>
    </interactant>
    <interactant intactId="EBI-6426628">
        <id>Q6VVB1</id>
        <label>NHLRC1</label>
    </interactant>
    <organismsDiffer>false</organismsDiffer>
    <experiments>8</experiments>
</comment>
<comment type="interaction">
    <interactant intactId="EBI-2506661">
        <id>O95278</id>
    </interactant>
    <interactant intactId="EBI-2506727">
        <id>Q9UQK1</id>
        <label>PPP1R3C</label>
    </interactant>
    <organismsDiffer>false</organismsDiffer>
    <experiments>5</experiments>
</comment>
<comment type="interaction">
    <interactant intactId="EBI-25836908">
        <id>O95278-6</id>
    </interactant>
    <interactant intactId="EBI-6624398">
        <id>P06307</id>
        <label>CCK</label>
    </interactant>
    <organismsDiffer>false</organismsDiffer>
    <experiments>3</experiments>
</comment>
<comment type="interaction">
    <interactant intactId="EBI-25836908">
        <id>O95278-6</id>
    </interactant>
    <interactant intactId="EBI-21591415">
        <id>P13473-2</id>
        <label>LAMP2</label>
    </interactant>
    <organismsDiffer>false</organismsDiffer>
    <experiments>3</experiments>
</comment>
<comment type="interaction">
    <interactant intactId="EBI-25836908">
        <id>O95278-6</id>
    </interactant>
    <interactant intactId="EBI-2623095">
        <id>Q9Y371</id>
        <label>SH3GLB1</label>
    </interactant>
    <organismsDiffer>false</organismsDiffer>
    <experiments>3</experiments>
</comment>
<comment type="subcellular location">
    <subcellularLocation>
        <location evidence="5 7 9 19 24">Cytoplasm</location>
    </subcellularLocation>
    <text evidence="24">Under glycogenolytic conditions localizes to the nucleus.</text>
</comment>
<comment type="subcellular location">
    <molecule>Isoform 1</molecule>
    <subcellularLocation>
        <location evidence="5 9 10 15 26 27 32">Cytoplasm</location>
    </subcellularLocation>
    <subcellularLocation>
        <location evidence="5 17 26">Endoplasmic reticulum membrane</location>
        <topology evidence="5 26">Peripheral membrane protein</topology>
        <orientation evidence="5 26">Cytoplasmic side</orientation>
    </subcellularLocation>
    <subcellularLocation>
        <location evidence="7">Cell membrane</location>
    </subcellularLocation>
    <text evidence="5 7 9 10 15 26">Colocalizes with glycogen synthase in punctate structures in the cytoplasm (PubMed:11739371, PubMed:14532330). Primarily associated with polyribosomes at the rough endoplasmic reticulum, and also detected at the plasma membrane (PubMed:11001928, PubMed:11220751, PubMed:11883934, PubMed:18311786).</text>
</comment>
<comment type="subcellular location">
    <molecule>Isoform 2</molecule>
    <subcellularLocation>
        <location evidence="27">Cytoplasm</location>
    </subcellularLocation>
    <subcellularLocation>
        <location evidence="10">Endoplasmic reticulum membrane</location>
        <topology evidence="10">Peripheral membrane protein</topology>
        <orientation evidence="10">Cytoplasmic side</orientation>
    </subcellularLocation>
    <subcellularLocation>
        <location evidence="10">Cell membrane</location>
    </subcellularLocation>
    <subcellularLocation>
        <location evidence="10 17 27">Nucleus</location>
    </subcellularLocation>
    <text evidence="10 27">Also found in the nucleus.</text>
</comment>
<comment type="subcellular location">
    <molecule>Isoform 4</molecule>
    <subcellularLocation>
        <location evidence="32">Cytoplasm</location>
    </subcellularLocation>
    <subcellularLocation>
        <location evidence="32">Nucleus</location>
    </subcellularLocation>
</comment>
<comment type="subcellular location">
    <molecule>Isoform 5</molecule>
    <subcellularLocation>
        <location evidence="32">Cytoplasm</location>
    </subcellularLocation>
    <subcellularLocation>
        <location evidence="32">Nucleus</location>
    </subcellularLocation>
</comment>
<comment type="subcellular location">
    <molecule>Isoform 7</molecule>
    <subcellularLocation>
        <location evidence="32">Cytoplasm</location>
    </subcellularLocation>
</comment>
<comment type="alternative products">
    <event type="alternative splicing"/>
    <event type="alternative initiation"/>
    <isoform>
        <id>O95278-1</id>
        <name>1</name>
        <name>A</name>
        <name evidence="43">LDH1</name>
        <name evidence="47">Laf331</name>
        <sequence type="displayed"/>
    </isoform>
    <isoform>
        <id>O95278-2</id>
        <name>2</name>
        <name>B</name>
        <name>C-terISO</name>
        <name evidence="47">Laf317</name>
        <sequence type="described" ref="VSP_011017 VSP_011018"/>
    </isoform>
    <isoform>
        <id>O95278-4</id>
        <name>4</name>
        <name evidence="47">Laf152</name>
        <sequence type="described" ref="VSP_011015 VSP_011016"/>
    </isoform>
    <isoform>
        <id>O95278-5</id>
        <name>5</name>
        <name evidence="47">Laf224</name>
        <sequence type="described" ref="VSP_042496 VSP_042497"/>
    </isoform>
    <isoform>
        <id>O95278-6</id>
        <name>6</name>
        <name evidence="47">Laf88</name>
        <sequence type="described" ref="VSP_042494"/>
    </isoform>
    <isoform>
        <id>O95278-7</id>
        <name>7</name>
        <name evidence="47">Laf177</name>
        <sequence type="described" ref="VSP_042495"/>
    </isoform>
    <isoform>
        <id>O95278-8</id>
        <name>8</name>
        <sequence type="described" ref="VSP_042493"/>
    </isoform>
    <isoform>
        <id>B3EWF7-1</id>
        <name>9</name>
        <name evidence="47">POCR</name>
        <sequence type="external"/>
    </isoform>
</comment>
<comment type="tissue specificity">
    <text evidence="15 39">Expressed in heart, skeletal muscle, kidney, pancreas and brain. Isoform 4 is also expressed in the placenta.</text>
</comment>
<comment type="domain">
    <text evidence="9 16">The CBM20 domain mediates binding to cytoplasmic glycogen and to Lafora polyglucosan bodies.</text>
</comment>
<comment type="PTM">
    <text evidence="20">Polyubiquitinated by NHLRC1/malin.</text>
</comment>
<comment type="PTM">
    <text evidence="31">Phosphorylation on Ser-25 by AMPK affects the phosphatase activity of the enzyme and its ability to homodimerize and interact with NHLRC1, PPP1R3C or PRKAA2.</text>
</comment>
<comment type="disease" evidence="5 6 9 11 12 15 16 17 18 26 37 38 39 40">
    <disease id="DI-00954">
        <name>Myoclonic epilepsy of lafora 1</name>
        <acronym>MELF1</acronym>
        <description>A form of progressive myoclonic epilepsy, a clinically and genetically heterogeneous group of disorders defined by the combination of action and reflex myoclonus, other types of epileptic seizures, and progressive neurodegeneration and neurocognitive impairment. MELF1 is an autosomal recessive, severe form characterized by onset of progressive neurodegeneration between 8 and 18 years of age. Initial features can include headache, myoclonic jerks, generalized seizures, and often visual hallucination. Typically, as seizures increase in frequency, cognitive function declines towards dementia, and affected individuals die usually within 10 years after onset. At the cellular level, MELF1 is characterized by accumulation of starch-like polyglucosans called Lafora bodies (LBs) that are most abundant in organs with the highest glucose metabolism: brain, heart, liver and skeletal muscle.</description>
        <dbReference type="MIM" id="254780"/>
    </disease>
    <text>The disease is caused by variants affecting the gene represented in this entry.</text>
</comment>
<comment type="miscellaneous">
    <molecule>Isoform 2</molecule>
    <text evidence="53">Produced by alternative splicing.</text>
</comment>
<comment type="miscellaneous">
    <molecule>Isoform 4</molecule>
    <text evidence="53">Produced by alternative splicing. May be due to an intron retention.</text>
</comment>
<comment type="miscellaneous">
    <molecule>Isoform 5</molecule>
    <text evidence="53">Produced by alternative splicing.</text>
</comment>
<comment type="miscellaneous">
    <molecule>Isoform 6</molecule>
    <text evidence="32">Produced by alternative initiation at Met-244 of isoform 1. Transcript amplified but protein not detected.</text>
</comment>
<comment type="miscellaneous">
    <molecule>Isoform 7</molecule>
    <text evidence="32">Produced by alternative splicing. Active phosphatase.</text>
</comment>
<comment type="miscellaneous">
    <molecule>Isoform 8</molecule>
    <text evidence="53">Produced by alternative splicing.</text>
</comment>
<comment type="similarity">
    <text evidence="53">Belongs to the protein-tyrosine phosphatase family.</text>
</comment>
<comment type="sequence caution" evidence="53">
    <conflict type="miscellaneous discrepancy">
        <sequence resource="EMBL-CDS" id="AAO15523"/>
    </conflict>
    <text>Probable cloning artifact.</text>
</comment>
<comment type="sequence caution" evidence="53">
    <conflict type="frameshift">
        <sequence resource="EMBL-CDS" id="BAG51107"/>
    </conflict>
</comment>
<comment type="online information" name="The Lafora progressive myoclonus epilepsy mutation and polymorphism database">
    <link uri="http://projects.tcag.ca/lafora/"/>
</comment>
<evidence type="ECO:0000250" key="1">
    <source>
        <dbReference type="UniProtKB" id="Q9WUA5"/>
    </source>
</evidence>
<evidence type="ECO:0000255" key="2">
    <source>
        <dbReference type="PROSITE-ProRule" id="PRU00160"/>
    </source>
</evidence>
<evidence type="ECO:0000255" key="3">
    <source>
        <dbReference type="PROSITE-ProRule" id="PRU00594"/>
    </source>
</evidence>
<evidence type="ECO:0000255" key="4">
    <source>
        <dbReference type="PROSITE-ProRule" id="PRU10044"/>
    </source>
</evidence>
<evidence type="ECO:0000269" key="5">
    <source>
    </source>
</evidence>
<evidence type="ECO:0000269" key="6">
    <source>
    </source>
</evidence>
<evidence type="ECO:0000269" key="7">
    <source>
    </source>
</evidence>
<evidence type="ECO:0000269" key="8">
    <source>
    </source>
</evidence>
<evidence type="ECO:0000269" key="9">
    <source>
    </source>
</evidence>
<evidence type="ECO:0000269" key="10">
    <source>
    </source>
</evidence>
<evidence type="ECO:0000269" key="11">
    <source>
    </source>
</evidence>
<evidence type="ECO:0000269" key="12">
    <source>
    </source>
</evidence>
<evidence type="ECO:0000269" key="13">
    <source>
    </source>
</evidence>
<evidence type="ECO:0000269" key="14">
    <source>
    </source>
</evidence>
<evidence type="ECO:0000269" key="15">
    <source>
    </source>
</evidence>
<evidence type="ECO:0000269" key="16">
    <source>
    </source>
</evidence>
<evidence type="ECO:0000269" key="17">
    <source>
    </source>
</evidence>
<evidence type="ECO:0000269" key="18">
    <source>
    </source>
</evidence>
<evidence type="ECO:0000269" key="19">
    <source>
    </source>
</evidence>
<evidence type="ECO:0000269" key="20">
    <source>
    </source>
</evidence>
<evidence type="ECO:0000269" key="21">
    <source>
    </source>
</evidence>
<evidence type="ECO:0000269" key="22">
    <source>
    </source>
</evidence>
<evidence type="ECO:0000269" key="23">
    <source>
    </source>
</evidence>
<evidence type="ECO:0000269" key="24">
    <source>
    </source>
</evidence>
<evidence type="ECO:0000269" key="25">
    <source>
    </source>
</evidence>
<evidence type="ECO:0000269" key="26">
    <source>
    </source>
</evidence>
<evidence type="ECO:0000269" key="27">
    <source>
    </source>
</evidence>
<evidence type="ECO:0000269" key="28">
    <source>
    </source>
</evidence>
<evidence type="ECO:0000269" key="29">
    <source>
    </source>
</evidence>
<evidence type="ECO:0000269" key="30">
    <source>
    </source>
</evidence>
<evidence type="ECO:0000269" key="31">
    <source>
    </source>
</evidence>
<evidence type="ECO:0000269" key="32">
    <source>
    </source>
</evidence>
<evidence type="ECO:0000269" key="33">
    <source>
    </source>
</evidence>
<evidence type="ECO:0000269" key="34">
    <source>
    </source>
</evidence>
<evidence type="ECO:0000269" key="35">
    <source>
    </source>
</evidence>
<evidence type="ECO:0000269" key="36">
    <source>
    </source>
</evidence>
<evidence type="ECO:0000269" key="37">
    <source>
    </source>
</evidence>
<evidence type="ECO:0000269" key="38">
    <source>
    </source>
</evidence>
<evidence type="ECO:0000269" key="39">
    <source>
    </source>
</evidence>
<evidence type="ECO:0000269" key="40">
    <source>
    </source>
</evidence>
<evidence type="ECO:0000303" key="41">
    <source>
    </source>
</evidence>
<evidence type="ECO:0000303" key="42">
    <source>
    </source>
</evidence>
<evidence type="ECO:0000303" key="43">
    <source>
    </source>
</evidence>
<evidence type="ECO:0000303" key="44">
    <source>
    </source>
</evidence>
<evidence type="ECO:0000303" key="45">
    <source>
    </source>
</evidence>
<evidence type="ECO:0000303" key="46">
    <source>
    </source>
</evidence>
<evidence type="ECO:0000303" key="47">
    <source>
    </source>
</evidence>
<evidence type="ECO:0000303" key="48">
    <source>
    </source>
</evidence>
<evidence type="ECO:0000303" key="49">
    <source>
    </source>
</evidence>
<evidence type="ECO:0000303" key="50">
    <source>
    </source>
</evidence>
<evidence type="ECO:0000303" key="51">
    <source>
    </source>
</evidence>
<evidence type="ECO:0000303" key="52">
    <source ref="4"/>
</evidence>
<evidence type="ECO:0000305" key="53"/>
<evidence type="ECO:0000305" key="54">
    <source>
    </source>
</evidence>
<evidence type="ECO:0000305" key="55">
    <source>
    </source>
</evidence>
<evidence type="ECO:0000305" key="56">
    <source>
    </source>
</evidence>
<evidence type="ECO:0000305" key="57">
    <source>
    </source>
</evidence>
<evidence type="ECO:0000305" key="58">
    <source>
    </source>
</evidence>
<evidence type="ECO:0000305" key="59">
    <source>
    </source>
</evidence>
<evidence type="ECO:0000305" key="60">
    <source>
    </source>
</evidence>
<evidence type="ECO:0000305" key="61">
    <source>
    </source>
</evidence>
<evidence type="ECO:0007744" key="62">
    <source>
        <dbReference type="PDB" id="4R30"/>
    </source>
</evidence>
<evidence type="ECO:0007744" key="63">
    <source>
        <dbReference type="PDB" id="4RKK"/>
    </source>
</evidence>
<evidence type="ECO:0007829" key="64">
    <source>
        <dbReference type="PDB" id="4R30"/>
    </source>
</evidence>
<evidence type="ECO:0007829" key="65">
    <source>
        <dbReference type="PDB" id="4RKK"/>
    </source>
</evidence>
<proteinExistence type="evidence at protein level"/>
<gene>
    <name type="primary">EPM2A</name>
</gene>
<reference key="1">
    <citation type="journal article" date="1998" name="Nat. Genet.">
        <title>Mutations in a gene encoding a novel protein tyrosine phosphatase cause progressive myoclonus epilepsy.</title>
        <authorList>
            <person name="Minassian B.A."/>
            <person name="Lee J.R."/>
            <person name="Herbrick J.-A."/>
            <person name="Huizenga J."/>
            <person name="Soder S."/>
            <person name="Mungall A.J."/>
            <person name="Dunham I."/>
            <person name="Gardner R."/>
            <person name="Fong C.G."/>
            <person name="Carpenter S."/>
            <person name="Jardim L."/>
            <person name="Satishchandra P."/>
            <person name="Andermann E."/>
            <person name="Snead O.C. III"/>
            <person name="Lopes-Cendes I."/>
            <person name="Tsui L.-C."/>
            <person name="Delgado-Escueta A.V."/>
            <person name="Rouleau G.A."/>
            <person name="Scherer S.W."/>
        </authorList>
    </citation>
    <scope>NUCLEOTIDE SEQUENCE [MRNA] (ISOFORMS 1 AND 2)</scope>
    <scope>ALTERNATIVE SPLICING</scope>
    <scope>TISSUE SPECIFICITY</scope>
    <scope>VARIANTS MELF1 CYS-108; SER-279 AND LEU-293</scope>
    <scope>VARIANT ASP-114</scope>
</reference>
<reference key="2">
    <citation type="journal article" date="2000" name="Hum. Mol. Genet.">
        <title>Laforin, defective in the progressive myoclonus epilepsy of Lafora type, is a dual-specificity phosphatase associated with polyribosomes.</title>
        <authorList>
            <person name="Ganesh S."/>
            <person name="Agarwala K.L."/>
            <person name="Ueda K."/>
            <person name="Akagi T."/>
            <person name="Shoda K."/>
            <person name="Usui T."/>
            <person name="Hashikawa T."/>
            <person name="Osada H."/>
            <person name="Delgado-Escueta A.V."/>
            <person name="Yamakawa K."/>
        </authorList>
    </citation>
    <scope>NUCLEOTIDE SEQUENCE [MRNA] (ISOFORM 1)</scope>
    <scope>FUNCTIONAL CHARACTERIZATION</scope>
    <scope>CATALYTIC ACTIVITY</scope>
    <scope>SUBCELLULAR LOCATION</scope>
    <scope>CHARACTERIZATION OF VARIANTS MELF1 HIS-171 AND LEU-293</scope>
    <source>
        <tissue>Fetal brain</tissue>
    </source>
</reference>
<reference key="3">
    <citation type="submission" date="1998-08" db="EMBL/GenBank/DDBJ databases">
        <authorList>
            <person name="Lee J.R."/>
            <person name="Scherer S.W."/>
        </authorList>
    </citation>
    <scope>NUCLEOTIDE SEQUENCE [MRNA] (ISOFORM 1)</scope>
</reference>
<reference key="4">
    <citation type="submission" date="2001-11" db="EMBL/GenBank/DDBJ databases">
        <title>Cloning of differentially spliced transcripts of the EPM2A gene.</title>
        <authorList>
            <person name="Ganesh S."/>
            <person name="Yamakawa K."/>
        </authorList>
    </citation>
    <scope>NUCLEOTIDE SEQUENCE [MRNA] (ISOFORM 8)</scope>
    <scope>NUCLEOTIDE SEQUENCE [MRNA] OF 25-331 (ISOFORM 4)</scope>
    <source>
        <tissue>Cerebellum</tissue>
        <tissue>Fetal brain</tissue>
    </source>
</reference>
<reference key="5">
    <citation type="journal article" date="2004" name="Nat. Genet.">
        <title>Complete sequencing and characterization of 21,243 full-length human cDNAs.</title>
        <authorList>
            <person name="Ota T."/>
            <person name="Suzuki Y."/>
            <person name="Nishikawa T."/>
            <person name="Otsuki T."/>
            <person name="Sugiyama T."/>
            <person name="Irie R."/>
            <person name="Wakamatsu A."/>
            <person name="Hayashi K."/>
            <person name="Sato H."/>
            <person name="Nagai K."/>
            <person name="Kimura K."/>
            <person name="Makita H."/>
            <person name="Sekine M."/>
            <person name="Obayashi M."/>
            <person name="Nishi T."/>
            <person name="Shibahara T."/>
            <person name="Tanaka T."/>
            <person name="Ishii S."/>
            <person name="Yamamoto J."/>
            <person name="Saito K."/>
            <person name="Kawai Y."/>
            <person name="Isono Y."/>
            <person name="Nakamura Y."/>
            <person name="Nagahari K."/>
            <person name="Murakami K."/>
            <person name="Yasuda T."/>
            <person name="Iwayanagi T."/>
            <person name="Wagatsuma M."/>
            <person name="Shiratori A."/>
            <person name="Sudo H."/>
            <person name="Hosoiri T."/>
            <person name="Kaku Y."/>
            <person name="Kodaira H."/>
            <person name="Kondo H."/>
            <person name="Sugawara M."/>
            <person name="Takahashi M."/>
            <person name="Kanda K."/>
            <person name="Yokoi T."/>
            <person name="Furuya T."/>
            <person name="Kikkawa E."/>
            <person name="Omura Y."/>
            <person name="Abe K."/>
            <person name="Kamihara K."/>
            <person name="Katsuta N."/>
            <person name="Sato K."/>
            <person name="Tanikawa M."/>
            <person name="Yamazaki M."/>
            <person name="Ninomiya K."/>
            <person name="Ishibashi T."/>
            <person name="Yamashita H."/>
            <person name="Murakawa K."/>
            <person name="Fujimori K."/>
            <person name="Tanai H."/>
            <person name="Kimata M."/>
            <person name="Watanabe M."/>
            <person name="Hiraoka S."/>
            <person name="Chiba Y."/>
            <person name="Ishida S."/>
            <person name="Ono Y."/>
            <person name="Takiguchi S."/>
            <person name="Watanabe S."/>
            <person name="Yosida M."/>
            <person name="Hotuta T."/>
            <person name="Kusano J."/>
            <person name="Kanehori K."/>
            <person name="Takahashi-Fujii A."/>
            <person name="Hara H."/>
            <person name="Tanase T.-O."/>
            <person name="Nomura Y."/>
            <person name="Togiya S."/>
            <person name="Komai F."/>
            <person name="Hara R."/>
            <person name="Takeuchi K."/>
            <person name="Arita M."/>
            <person name="Imose N."/>
            <person name="Musashino K."/>
            <person name="Yuuki H."/>
            <person name="Oshima A."/>
            <person name="Sasaki N."/>
            <person name="Aotsuka S."/>
            <person name="Yoshikawa Y."/>
            <person name="Matsunawa H."/>
            <person name="Ichihara T."/>
            <person name="Shiohata N."/>
            <person name="Sano S."/>
            <person name="Moriya S."/>
            <person name="Momiyama H."/>
            <person name="Satoh N."/>
            <person name="Takami S."/>
            <person name="Terashima Y."/>
            <person name="Suzuki O."/>
            <person name="Nakagawa S."/>
            <person name="Senoh A."/>
            <person name="Mizoguchi H."/>
            <person name="Goto Y."/>
            <person name="Shimizu F."/>
            <person name="Wakebe H."/>
            <person name="Hishigaki H."/>
            <person name="Watanabe T."/>
            <person name="Sugiyama A."/>
            <person name="Takemoto M."/>
            <person name="Kawakami B."/>
            <person name="Yamazaki M."/>
            <person name="Watanabe K."/>
            <person name="Kumagai A."/>
            <person name="Itakura S."/>
            <person name="Fukuzumi Y."/>
            <person name="Fujimori Y."/>
            <person name="Komiyama M."/>
            <person name="Tashiro H."/>
            <person name="Tanigami A."/>
            <person name="Fujiwara T."/>
            <person name="Ono T."/>
            <person name="Yamada K."/>
            <person name="Fujii Y."/>
            <person name="Ozaki K."/>
            <person name="Hirao M."/>
            <person name="Ohmori Y."/>
            <person name="Kawabata A."/>
            <person name="Hikiji T."/>
            <person name="Kobatake N."/>
            <person name="Inagaki H."/>
            <person name="Ikema Y."/>
            <person name="Okamoto S."/>
            <person name="Okitani R."/>
            <person name="Kawakami T."/>
            <person name="Noguchi S."/>
            <person name="Itoh T."/>
            <person name="Shigeta K."/>
            <person name="Senba T."/>
            <person name="Matsumura K."/>
            <person name="Nakajima Y."/>
            <person name="Mizuno T."/>
            <person name="Morinaga M."/>
            <person name="Sasaki M."/>
            <person name="Togashi T."/>
            <person name="Oyama M."/>
            <person name="Hata H."/>
            <person name="Watanabe M."/>
            <person name="Komatsu T."/>
            <person name="Mizushima-Sugano J."/>
            <person name="Satoh T."/>
            <person name="Shirai Y."/>
            <person name="Takahashi Y."/>
            <person name="Nakagawa K."/>
            <person name="Okumura K."/>
            <person name="Nagase T."/>
            <person name="Nomura N."/>
            <person name="Kikuchi H."/>
            <person name="Masuho Y."/>
            <person name="Yamashita R."/>
            <person name="Nakai K."/>
            <person name="Yada T."/>
            <person name="Nakamura Y."/>
            <person name="Ohara O."/>
            <person name="Isogai T."/>
            <person name="Sugano S."/>
        </authorList>
    </citation>
    <scope>NUCLEOTIDE SEQUENCE [LARGE SCALE MRNA] (ISOFORMS 7 AND 8)</scope>
    <source>
        <tissue>Fetal brain</tissue>
        <tissue>Teratocarcinoma</tissue>
    </source>
</reference>
<reference key="6">
    <citation type="journal article" date="2003" name="Nature">
        <title>The DNA sequence and analysis of human chromosome 6.</title>
        <authorList>
            <person name="Mungall A.J."/>
            <person name="Palmer S.A."/>
            <person name="Sims S.K."/>
            <person name="Edwards C.A."/>
            <person name="Ashurst J.L."/>
            <person name="Wilming L."/>
            <person name="Jones M.C."/>
            <person name="Horton R."/>
            <person name="Hunt S.E."/>
            <person name="Scott C.E."/>
            <person name="Gilbert J.G.R."/>
            <person name="Clamp M.E."/>
            <person name="Bethel G."/>
            <person name="Milne S."/>
            <person name="Ainscough R."/>
            <person name="Almeida J.P."/>
            <person name="Ambrose K.D."/>
            <person name="Andrews T.D."/>
            <person name="Ashwell R.I.S."/>
            <person name="Babbage A.K."/>
            <person name="Bagguley C.L."/>
            <person name="Bailey J."/>
            <person name="Banerjee R."/>
            <person name="Barker D.J."/>
            <person name="Barlow K.F."/>
            <person name="Bates K."/>
            <person name="Beare D.M."/>
            <person name="Beasley H."/>
            <person name="Beasley O."/>
            <person name="Bird C.P."/>
            <person name="Blakey S.E."/>
            <person name="Bray-Allen S."/>
            <person name="Brook J."/>
            <person name="Brown A.J."/>
            <person name="Brown J.Y."/>
            <person name="Burford D.C."/>
            <person name="Burrill W."/>
            <person name="Burton J."/>
            <person name="Carder C."/>
            <person name="Carter N.P."/>
            <person name="Chapman J.C."/>
            <person name="Clark S.Y."/>
            <person name="Clark G."/>
            <person name="Clee C.M."/>
            <person name="Clegg S."/>
            <person name="Cobley V."/>
            <person name="Collier R.E."/>
            <person name="Collins J.E."/>
            <person name="Colman L.K."/>
            <person name="Corby N.R."/>
            <person name="Coville G.J."/>
            <person name="Culley K.M."/>
            <person name="Dhami P."/>
            <person name="Davies J."/>
            <person name="Dunn M."/>
            <person name="Earthrowl M.E."/>
            <person name="Ellington A.E."/>
            <person name="Evans K.A."/>
            <person name="Faulkner L."/>
            <person name="Francis M.D."/>
            <person name="Frankish A."/>
            <person name="Frankland J."/>
            <person name="French L."/>
            <person name="Garner P."/>
            <person name="Garnett J."/>
            <person name="Ghori M.J."/>
            <person name="Gilby L.M."/>
            <person name="Gillson C.J."/>
            <person name="Glithero R.J."/>
            <person name="Grafham D.V."/>
            <person name="Grant M."/>
            <person name="Gribble S."/>
            <person name="Griffiths C."/>
            <person name="Griffiths M.N.D."/>
            <person name="Hall R."/>
            <person name="Halls K.S."/>
            <person name="Hammond S."/>
            <person name="Harley J.L."/>
            <person name="Hart E.A."/>
            <person name="Heath P.D."/>
            <person name="Heathcott R."/>
            <person name="Holmes S.J."/>
            <person name="Howden P.J."/>
            <person name="Howe K.L."/>
            <person name="Howell G.R."/>
            <person name="Huckle E."/>
            <person name="Humphray S.J."/>
            <person name="Humphries M.D."/>
            <person name="Hunt A.R."/>
            <person name="Johnson C.M."/>
            <person name="Joy A.A."/>
            <person name="Kay M."/>
            <person name="Keenan S.J."/>
            <person name="Kimberley A.M."/>
            <person name="King A."/>
            <person name="Laird G.K."/>
            <person name="Langford C."/>
            <person name="Lawlor S."/>
            <person name="Leongamornlert D.A."/>
            <person name="Leversha M."/>
            <person name="Lloyd C.R."/>
            <person name="Lloyd D.M."/>
            <person name="Loveland J.E."/>
            <person name="Lovell J."/>
            <person name="Martin S."/>
            <person name="Mashreghi-Mohammadi M."/>
            <person name="Maslen G.L."/>
            <person name="Matthews L."/>
            <person name="McCann O.T."/>
            <person name="McLaren S.J."/>
            <person name="McLay K."/>
            <person name="McMurray A."/>
            <person name="Moore M.J.F."/>
            <person name="Mullikin J.C."/>
            <person name="Niblett D."/>
            <person name="Nickerson T."/>
            <person name="Novik K.L."/>
            <person name="Oliver K."/>
            <person name="Overton-Larty E.K."/>
            <person name="Parker A."/>
            <person name="Patel R."/>
            <person name="Pearce A.V."/>
            <person name="Peck A.I."/>
            <person name="Phillimore B.J.C.T."/>
            <person name="Phillips S."/>
            <person name="Plumb R.W."/>
            <person name="Porter K.M."/>
            <person name="Ramsey Y."/>
            <person name="Ranby S.A."/>
            <person name="Rice C.M."/>
            <person name="Ross M.T."/>
            <person name="Searle S.M."/>
            <person name="Sehra H.K."/>
            <person name="Sheridan E."/>
            <person name="Skuce C.D."/>
            <person name="Smith S."/>
            <person name="Smith M."/>
            <person name="Spraggon L."/>
            <person name="Squares S.L."/>
            <person name="Steward C.A."/>
            <person name="Sycamore N."/>
            <person name="Tamlyn-Hall G."/>
            <person name="Tester J."/>
            <person name="Theaker A.J."/>
            <person name="Thomas D.W."/>
            <person name="Thorpe A."/>
            <person name="Tracey A."/>
            <person name="Tromans A."/>
            <person name="Tubby B."/>
            <person name="Wall M."/>
            <person name="Wallis J.M."/>
            <person name="West A.P."/>
            <person name="White S.S."/>
            <person name="Whitehead S.L."/>
            <person name="Whittaker H."/>
            <person name="Wild A."/>
            <person name="Willey D.J."/>
            <person name="Wilmer T.E."/>
            <person name="Wood J.M."/>
            <person name="Wray P.W."/>
            <person name="Wyatt J.C."/>
            <person name="Young L."/>
            <person name="Younger R.M."/>
            <person name="Bentley D.R."/>
            <person name="Coulson A."/>
            <person name="Durbin R.M."/>
            <person name="Hubbard T."/>
            <person name="Sulston J.E."/>
            <person name="Dunham I."/>
            <person name="Rogers J."/>
            <person name="Beck S."/>
        </authorList>
    </citation>
    <scope>NUCLEOTIDE SEQUENCE [LARGE SCALE GENOMIC DNA]</scope>
</reference>
<reference key="7">
    <citation type="submission" date="2005-09" db="EMBL/GenBank/DDBJ databases">
        <authorList>
            <person name="Mural R.J."/>
            <person name="Istrail S."/>
            <person name="Sutton G.G."/>
            <person name="Florea L."/>
            <person name="Halpern A.L."/>
            <person name="Mobarry C.M."/>
            <person name="Lippert R."/>
            <person name="Walenz B."/>
            <person name="Shatkay H."/>
            <person name="Dew I."/>
            <person name="Miller J.R."/>
            <person name="Flanigan M.J."/>
            <person name="Edwards N.J."/>
            <person name="Bolanos R."/>
            <person name="Fasulo D."/>
            <person name="Halldorsson B.V."/>
            <person name="Hannenhalli S."/>
            <person name="Turner R."/>
            <person name="Yooseph S."/>
            <person name="Lu F."/>
            <person name="Nusskern D.R."/>
            <person name="Shue B.C."/>
            <person name="Zheng X.H."/>
            <person name="Zhong F."/>
            <person name="Delcher A.L."/>
            <person name="Huson D.H."/>
            <person name="Kravitz S.A."/>
            <person name="Mouchard L."/>
            <person name="Reinert K."/>
            <person name="Remington K.A."/>
            <person name="Clark A.G."/>
            <person name="Waterman M.S."/>
            <person name="Eichler E.E."/>
            <person name="Adams M.D."/>
            <person name="Hunkapiller M.W."/>
            <person name="Myers E.W."/>
            <person name="Venter J.C."/>
        </authorList>
    </citation>
    <scope>NUCLEOTIDE SEQUENCE [LARGE SCALE GENOMIC DNA]</scope>
</reference>
<reference key="8">
    <citation type="journal article" date="2004" name="Genome Res.">
        <title>The status, quality, and expansion of the NIH full-length cDNA project: the Mammalian Gene Collection (MGC).</title>
        <authorList>
            <consortium name="The MGC Project Team"/>
        </authorList>
    </citation>
    <scope>NUCLEOTIDE SEQUENCE [LARGE SCALE MRNA] (ISOFORMS 1 AND 6)</scope>
    <source>
        <tissue>Hypothalamus</tissue>
        <tissue>Kidney</tissue>
    </source>
</reference>
<reference key="9">
    <citation type="journal article" date="1999" name="Hum. Mol. Genet.">
        <title>A novel protein tyrosine phosphatase gene is mutated in progressive myoclonus epilepsy of the Lafora type (EPM2).</title>
        <authorList>
            <person name="Serratosa J.M."/>
            <person name="Gomez-Garre P."/>
            <person name="Gallardo M.E."/>
            <person name="Anta B."/>
            <person name="de Bernabe D.B."/>
            <person name="Lindhout D."/>
            <person name="Augustijn P.B."/>
            <person name="Tassinari C.A."/>
            <person name="Malafosse R.M."/>
            <person name="Topcu M."/>
            <person name="Grid D."/>
            <person name="Dravet C."/>
            <person name="Berkovic S.F."/>
            <person name="de Cordoba S.R."/>
        </authorList>
    </citation>
    <scope>NUCLEOTIDE SEQUENCE [MRNA] OF 82-331 (ISOFORMS 1 AND 2)</scope>
    <scope>VARIANTS MELF1 HIS-171; ILE-194; SER-279 AND ASN-294</scope>
</reference>
<reference key="10">
    <citation type="journal article" date="2001" name="Ann. Neurol.">
        <title>Laforin is a cell membrane and endoplasmic reticulum-associated protein tyrosine phosphatase.</title>
        <authorList>
            <person name="Minassian B.A."/>
            <person name="Andrade D.M."/>
            <person name="Ianzano L."/>
            <person name="Young E.J."/>
            <person name="Chan E."/>
            <person name="Ackerley C.A."/>
            <person name="Scherer S.W."/>
        </authorList>
    </citation>
    <scope>FUNCTION</scope>
    <scope>CATALYTIC ACTIVITY</scope>
    <scope>SUBCELLULAR LOCATION</scope>
    <scope>MUTAGENESIS OF CYS-266</scope>
    <scope>ACTIVE SITE</scope>
</reference>
<reference key="11">
    <citation type="journal article" date="2002" name="Biochem. Biophys. Res. Commun.">
        <title>Alternative splicing modulates subcellular localization of laforin.</title>
        <authorList>
            <person name="Ganesh S."/>
            <person name="Suzuki T."/>
            <person name="Yamakawa K."/>
        </authorList>
    </citation>
    <scope>ALTERNATIVE SPLICING</scope>
    <scope>SUBCELLULAR LOCATION (ISOFORM 2)</scope>
</reference>
<reference key="12">
    <citation type="journal article" date="2002" name="J. Biol. Chem.">
        <title>A unique carbohydrate binding domain targets the Lafora disease phosphatase to glycogen.</title>
        <authorList>
            <person name="Wang J."/>
            <person name="Stuckey J.A."/>
            <person name="Wishart M.J."/>
            <person name="Dixon J.E."/>
        </authorList>
    </citation>
    <scope>GLYCOGEN-BINDING</scope>
    <scope>DOMAIN</scope>
    <scope>SUBCELLULAR LOCATION</scope>
    <scope>CHARACTERIZATION OF VARIANT MELF1 GLY-32</scope>
    <scope>CATALYTIC ACTIVITY</scope>
    <scope>ACTIVE SITE</scope>
    <scope>MUTAGENESIS OF LYS-87 AND CYS-266</scope>
</reference>
<reference key="13">
    <citation type="journal article" date="2003" name="Genomics">
        <title>Identification of a novel protein interacting with laforin, the EPM2A progressive myoclonus epilepsy gene product.</title>
        <authorList>
            <person name="Ianzano L."/>
            <person name="Zhao X.C."/>
            <person name="Minassian B.A."/>
            <person name="Scherer S.W."/>
        </authorList>
    </citation>
    <scope>INTERACTION WITH EPM2AIP1</scope>
</reference>
<reference key="14">
    <citation type="journal article" date="2003" name="Hum. Mol. Genet.">
        <title>The Lafora disease gene product laforin interacts with HIRIP5, a phylogenetically conserved protein containing a NifU-like domain.</title>
        <authorList>
            <person name="Ganesh S."/>
            <person name="Tsurutani N."/>
            <person name="Suzuki T."/>
            <person name="Ueda K."/>
            <person name="Agarwala K.L."/>
            <person name="Osada H."/>
            <person name="Delgado-Escueta A.V."/>
            <person name="Yamakawa K."/>
        </authorList>
    </citation>
    <scope>INTERACTION WITH HIRIP5</scope>
</reference>
<reference key="15">
    <citation type="journal article" date="2003" name="Hum. Mol. Genet.">
        <title>Laforin, the dual-phosphatase responsible for Lafora disease, interacts with R5 (PTG), a regulatory subunit of protein phosphatase-1 that enhances glycogen accumulation.</title>
        <authorList>
            <person name="Fernandez-Sanchez M.E."/>
            <person name="Criado-Garcia O."/>
            <person name="Heath K.E."/>
            <person name="Garcia-Fojeda B."/>
            <person name="Medrano-Fernandez I."/>
            <person name="Gomez-Garre P."/>
            <person name="Sanz P."/>
            <person name="Serratosa J.M."/>
            <person name="Rodriguez de Cordoba S."/>
        </authorList>
    </citation>
    <scope>FUNCTION</scope>
    <scope>CATALYTIC ACTIVITY</scope>
    <scope>SELF-INTERACTION</scope>
    <scope>SUBCELLULAR LOCATION</scope>
    <scope>GLYCOGEN-BINDING</scope>
    <scope>INTERACTION WITH PPP1R3C</scope>
    <scope>TISSUE SPECIFICITY</scope>
    <scope>MUTAGENESIS OF ASP-235 AND CYS-266</scope>
    <scope>ACTIVE SITE</scope>
    <scope>CHARACTERIZATION OF VARIANTS MELF1 GLY-32; LEU-84; CYS-108; ILE-194; SER-240; SER-279; LEU-293; ASN-294 AND LEU-301</scope>
</reference>
<reference key="16">
    <citation type="journal article" date="2004" name="Biochem. Biophys. Res. Commun.">
        <title>The carbohydrate-binding domain of Lafora disease protein targets Lafora polyglucosan bodies.</title>
        <authorList>
            <person name="Ganesh S."/>
            <person name="Tsurutani N."/>
            <person name="Suzuki T."/>
            <person name="Hoshii Y."/>
            <person name="Ishihara T."/>
            <person name="Delgado-Escueta A.V."/>
            <person name="Yamakawa K."/>
        </authorList>
    </citation>
    <scope>BINDING TO GLYCOGEN AND LAFORA BODIES</scope>
    <scope>DOMAIN</scope>
    <scope>CHARACTERIZATION OF VARIANTS MELF1 PRO-25; LYS-28; GLY-32 AND LEU-88</scope>
    <scope>CHARACTERIZATION OF VARIANT PRO-46</scope>
</reference>
<reference key="17">
    <citation type="journal article" date="2004" name="Hum. Mol. Genet.">
        <title>Laforin preferentially binds the neurotoxic starch-like polyglucosans, which form in its absence in progressive myoclonus epilepsy.</title>
        <authorList>
            <person name="Chan E.M."/>
            <person name="Ackerley C.A."/>
            <person name="Lohi H."/>
            <person name="Ianzano L."/>
            <person name="Cortez M.A."/>
            <person name="Shannon P."/>
            <person name="Scherer S.W."/>
            <person name="Minassian B.A."/>
        </authorList>
    </citation>
    <scope>FUNCTION</scope>
    <scope>SUBCELLULAR LOCATION</scope>
    <scope>BINDING TO LAFORA GLUCAN BODIES</scope>
</reference>
<reference key="18">
    <citation type="journal article" date="2005" name="Proc. Natl. Acad. Sci. U.S.A.">
        <title>Insights into Lafora disease: malin is an E3 ubiquitin ligase that ubiquitinates and promotes the degradation of laforin.</title>
        <authorList>
            <person name="Gentry M.S."/>
            <person name="Worby C.A."/>
            <person name="Dixon J.E."/>
        </authorList>
    </citation>
    <scope>INTERACTION WITH NHLRC1</scope>
    <scope>POLYUBIQUITINATION</scope>
</reference>
<reference key="19">
    <citation type="journal article" date="2006" name="J. Biol. Chem.">
        <title>Laforin, a dual specificity phosphatase that dephosphorylates complex carbohydrates.</title>
        <authorList>
            <person name="Worby C.A."/>
            <person name="Gentry M.S."/>
            <person name="Dixon J.E."/>
        </authorList>
    </citation>
    <scope>FUNCTION AS A GLUCAN PHOSPHATASE</scope>
    <scope>CATALYTIC ACTIVITY</scope>
    <scope>INTERACTION WITH PPP1R3B; PPP1R3C AND PPP1R3D</scope>
</reference>
<reference key="20">
    <citation type="journal article" date="2006" name="J. Biol. Chem.">
        <title>Dimerization of Laforin is required for its optimal phosphatase activity, regulation of GSK3beta phosphorylation, and Wnt signaling.</title>
        <authorList>
            <person name="Liu Y."/>
            <person name="Wang Y."/>
            <person name="Wu C."/>
            <person name="Liu Y."/>
            <person name="Zheng P."/>
        </authorList>
    </citation>
    <scope>FUNCTION</scope>
    <scope>CATALYTIC ACTIVITY</scope>
    <scope>SUBUNIT</scope>
</reference>
<reference key="21">
    <citation type="journal article" date="2007" name="Genes Dev.">
        <title>A role for AGL ubiquitination in the glycogen storage disorders of Lafora and Cori's disease.</title>
        <authorList>
            <person name="Cheng A."/>
            <person name="Zhang M."/>
            <person name="Gentry M.S."/>
            <person name="Worby C.A."/>
            <person name="Dixon J.E."/>
            <person name="Saltiel A.R."/>
        </authorList>
    </citation>
    <scope>SUBCELLULAR LOCATION</scope>
</reference>
<reference key="22">
    <citation type="journal article" date="2008" name="Hum. Mol. Genet.">
        <title>Modulation of functional properties of laforin phosphatase by alternative splicing reveals a novel mechanism for the EPM2A gene in Lafora progressive myoclonus epilepsy.</title>
        <authorList>
            <person name="Dubey D."/>
            <person name="Ganesh S."/>
        </authorList>
    </citation>
    <scope>FUNCTION (ISOFORMS 1 AND 2)</scope>
    <scope>CATALYTIC ACTIVITY</scope>
    <scope>HOMODIMERIZATION</scope>
    <scope>SUBUNIT</scope>
    <scope>SUBCELLULAR LOCATION</scope>
    <scope>INTERACTION WITH NHLRC1 AND GLYCOGEN</scope>
</reference>
<reference key="23">
    <citation type="journal article" date="2008" name="J. Biol. Chem.">
        <title>Malin decreases glycogen accumulation by promoting the degradation of protein targeting to glycogen (PTG).</title>
        <authorList>
            <person name="Worby C.A."/>
            <person name="Gentry M.S."/>
            <person name="Dixon J.E."/>
        </authorList>
    </citation>
    <scope>FUNCTION</scope>
    <scope>INTERACTION WITH PPP1R3C</scope>
</reference>
<reference key="24">
    <citation type="journal article" date="2009" name="Hum. Mol. Genet.">
        <title>The malin-laforin complex suppresses the cellular toxicity of misfolded proteins by promoting their degradation through the ubiquitin-proteasome system.</title>
        <authorList>
            <person name="Garyali P."/>
            <person name="Siwach P."/>
            <person name="Singh P.K."/>
            <person name="Puri R."/>
            <person name="Mittal S."/>
            <person name="Sengupta S."/>
            <person name="Parihar R."/>
            <person name="Ganesh S."/>
        </authorList>
    </citation>
    <scope>FUNCTION</scope>
    <scope>COMPLEX FORMATION WITH NHLRC1 AND HSP70</scope>
</reference>
<reference key="25">
    <citation type="journal article" date="2009" name="J. Biol. Chem.">
        <title>Hyperphosphorylation and aggregation of Tau in laforin-deficient mice, an animal model for Lafora disease.</title>
        <authorList>
            <person name="Puri R."/>
            <person name="Suzuki T."/>
            <person name="Yamakawa K."/>
            <person name="Ganesh S."/>
        </authorList>
    </citation>
    <scope>INTERACTION WITH MAPT</scope>
</reference>
<reference key="26">
    <citation type="journal article" date="2010" name="Hum. Mol. Genet.">
        <title>Laforin, the most common protein mutated in Lafora disease, regulates autophagy.</title>
        <authorList>
            <person name="Aguado C."/>
            <person name="Sarkar S."/>
            <person name="Korolchuk V.I."/>
            <person name="Criado O."/>
            <person name="Vernia S."/>
            <person name="Boya P."/>
            <person name="Sanz P."/>
            <person name="de Cordoba S.R."/>
            <person name="Knecht E."/>
            <person name="Rubinsztein D.C."/>
        </authorList>
    </citation>
    <scope>FUNCTION</scope>
</reference>
<reference key="27">
    <citation type="journal article" date="2011" name="Biochem. J.">
        <title>Laforin, a dual-specificity phosphatase involved in Lafora disease, is phosphorylated at Ser25 by AMP-activated protein kinase.</title>
        <authorList>
            <person name="Roma-Mateo C."/>
            <person name="Solaz-Fuster Mdel C."/>
            <person name="Gimeno-Alcaniz J.V."/>
            <person name="Dukhande V.V."/>
            <person name="Donderis J."/>
            <person name="Worby C.A."/>
            <person name="Marina A."/>
            <person name="Criado O."/>
            <person name="Koller A."/>
            <person name="Rodriguez De Cordoba S."/>
            <person name="Gentry M.S."/>
            <person name="Sanz P."/>
        </authorList>
    </citation>
    <scope>PHOSPHORYLATION AT SER-25</scope>
    <scope>MUTAGENESIS OF SER-25; SER-168; THR-187 AND THR-194</scope>
    <scope>INTERACTION WITH NHLRC1; PPP1R3C AND PRKAA2</scope>
</reference>
<reference key="28">
    <citation type="journal article" date="2012" name="Brain">
        <title>Early-onset Lafora body disease.</title>
        <authorList>
            <person name="Turnbull J."/>
            <person name="Girard J.M."/>
            <person name="Lohi H."/>
            <person name="Chan E.M."/>
            <person name="Wang P."/>
            <person name="Tiberia E."/>
            <person name="Omer S."/>
            <person name="Ahmed M."/>
            <person name="Bennett C."/>
            <person name="Chakrabarty A."/>
            <person name="Tyagi A."/>
            <person name="Liu Y."/>
            <person name="Pencea N."/>
            <person name="Zhao X."/>
            <person name="Scherer S.W."/>
            <person name="Ackerley C.A."/>
            <person name="Minassian B.A."/>
        </authorList>
    </citation>
    <scope>INTERACTION WITH PRDM8</scope>
</reference>
<reference key="29">
    <citation type="journal article" date="2012" name="Genomics">
        <title>Identification and characterization of novel splice variants of the human EPM2A gene mutated in Lafora progressive myoclonus epilepsy.</title>
        <authorList>
            <person name="Dubey D."/>
            <person name="Parihar R."/>
            <person name="Ganesh S."/>
        </authorList>
    </citation>
    <scope>ALTERNATIVE SPLICING (ISOFORMS 4; 5; 6; 7 AND 9)</scope>
    <scope>FUNCTION (ISOFORMS 2 AND 7)</scope>
    <scope>INTERACTION WITH NHLRC1 AND GLYCOGEN</scope>
    <scope>SUBCELLULAR LOCATION</scope>
    <scope>SUBUNIT</scope>
    <scope>CATALYTIC ACTIVITY</scope>
    <scope>MUTAGENESIS OF CYS-266</scope>
    <scope>ACTIVE SITE</scope>
</reference>
<reference key="30">
    <citation type="journal article" date="2013" name="Int. J. Biochem. Cell Biol.">
        <title>Glycogenic activity of R6, a protein phosphatase 1 regulatory subunit, is modulated by the laforin-malin complex.</title>
        <authorList>
            <person name="Rubio-Villena C."/>
            <person name="Garcia-Gimeno M.A."/>
            <person name="Sanz P."/>
        </authorList>
    </citation>
    <scope>FUNCTION</scope>
    <scope>INTERACTION WITH PPP1R3D</scope>
</reference>
<reference key="31">
    <citation type="journal article" date="2013" name="PLoS ONE">
        <title>Dimerization of the glucan phosphatase laforin requires the participation of cysteine 329.</title>
        <authorList>
            <person name="Sanchez-Martin P."/>
            <person name="Raththagala M."/>
            <person name="Bridges T.M."/>
            <person name="Husodo S."/>
            <person name="Gentry M.S."/>
            <person name="Sanz P."/>
            <person name="Roma-Mateo C."/>
        </authorList>
    </citation>
    <scope>CATALYTIC ACTIVITY</scope>
    <scope>FUNCTION</scope>
    <scope>INTERACTION WITH NHLRC1</scope>
    <scope>SUBUNIT</scope>
    <scope>MUTAGENESIS OF 109-CYS-CYS-110; CYS-123; CYS-169; CYS-205; CYS-250; CYS-266; CYS-329 AND 329-CYS--CYS-331</scope>
</reference>
<reference key="32">
    <citation type="journal article" date="2015" name="J. Biol. Chem.">
        <title>Mechanistic insights into glucan phosphatase activity against polyglucan substrates.</title>
        <authorList>
            <person name="Meekins D.A."/>
            <person name="Raththagala M."/>
            <person name="Auger K.D."/>
            <person name="Turner B.D."/>
            <person name="Santelia D."/>
            <person name="Koetting O."/>
            <person name="Gentry M.S."/>
            <person name="Vander Kooi C.W."/>
        </authorList>
    </citation>
    <scope>CATALYTIC ACTIVITY</scope>
    <scope>FUNCTION</scope>
    <scope>MOTIF</scope>
    <scope>CHARACTERIZATION OF VARIANT MELF1 GLY-32</scope>
</reference>
<reference evidence="62" key="33">
    <citation type="journal article" date="2015" name="J. Biol. Chem.">
        <title>Dimeric quaternary structure of human laforin.</title>
        <authorList>
            <person name="Sankhala R.S."/>
            <person name="Koksal A.C."/>
            <person name="Ho L."/>
            <person name="Nitschke F."/>
            <person name="Minassian B.A."/>
            <person name="Cingolani G."/>
        </authorList>
    </citation>
    <scope>X-RAY CRYSTALLOGRAPHY (2.30 ANGSTROMS) OF 148-331</scope>
    <scope>FUNCTION AS GLUCAN PHOSPHATASE</scope>
    <scope>CATALYTIC ACTIVITY</scope>
    <scope>SUBUNIT</scope>
    <scope>MUTAGENESIS OF CYS-169; ARG-171; ASP-197; ASP-235; CYS-266; ARG-272 AND CYS-329</scope>
</reference>
<reference evidence="63" key="34">
    <citation type="journal article" date="2015" name="Mol. Cell">
        <title>Structural mechanism of laforin function in glycogen dephosphorylation and lafora disease.</title>
        <authorList>
            <person name="Raththagala M."/>
            <person name="Brewer M.K."/>
            <person name="Parker M.W."/>
            <person name="Sherwood A.R."/>
            <person name="Wong B.K."/>
            <person name="Hsu S."/>
            <person name="Bridges T.M."/>
            <person name="Paasch B.C."/>
            <person name="Hellman L.M."/>
            <person name="Husodo S."/>
            <person name="Meekins D.A."/>
            <person name="Taylor A.O."/>
            <person name="Turner B.D."/>
            <person name="Auger K.D."/>
            <person name="Dukhande V.V."/>
            <person name="Chakravarthy S."/>
            <person name="Sanz P."/>
            <person name="Woods V.L. Jr."/>
            <person name="Li S."/>
            <person name="Vander Kooi C.W."/>
            <person name="Gentry M.S."/>
        </authorList>
    </citation>
    <scope>X-RAY CRYSTALLOGRAPHY (2.40 ANGSTROMS) OF 1-329 IN COMPLEX WITH MALTOHEXAOSE AND PHOSPHATE</scope>
    <scope>CATALYTIC ACTIVITY</scope>
    <scope>FUNCTION</scope>
    <scope>SUBUNIT</scope>
    <scope>MUTAGENESIS OF VAL-8; LYS-87; TRP-99; ILE-126; THR-142; ASP-197; MET-236 AND CYS-266</scope>
    <scope>CHARACTERIZATION OF VARIANTS MELF1 GLY-32; HIS-171; SER-240; ASN-294 AND LEU-301</scope>
</reference>
<reference key="35">
    <citation type="journal article" date="2000" name="Eur. J. Hum. Genet.">
        <title>Mutational spectrum of the EPM2A gene in progressive myoclonus epilepsy of Lafora: high degree of allelic heterogeneity and prevalence of deletions.</title>
        <authorList>
            <person name="Gomez-Garre P."/>
            <person name="Sanz Y."/>
            <person name="Rodriguez de Cordoba S.R."/>
            <person name="Serratosa J.M."/>
        </authorList>
    </citation>
    <scope>VARIANTS MELF1 LEU-84; SER-240 AND LEU-301</scope>
</reference>
<reference key="36">
    <citation type="journal article" date="2001" name="Mol. Cell. Probes">
        <title>Mutation screening for Japanese Lafora's disease patients: identification of novel sequence variants in the coding and upstream regulatory regions of EPM2A gene.</title>
        <authorList>
            <person name="Ganesh S."/>
            <person name="Shoda K."/>
            <person name="Amano K."/>
            <person name="Uchiyama A."/>
            <person name="Kumada S."/>
            <person name="Moriyama N."/>
            <person name="Hirose S."/>
            <person name="Yamakawa K."/>
        </authorList>
    </citation>
    <scope>VARIANT PRO-46</scope>
</reference>
<reference key="37">
    <citation type="journal article" date="2002" name="Hum. Mol. Genet.">
        <title>Genotype-phenotype correlations for EPM2A mutations in Lafora's progressive myoclonus epilepsy: exon 1 mutations associate with an early-onset cognitive deficit subphenotype.</title>
        <authorList>
            <person name="Ganesh S."/>
            <person name="Delgado-Escueta A.V."/>
            <person name="Suzuki T."/>
            <person name="Francheschetti S."/>
            <person name="Riggio C."/>
            <person name="Avanzini G."/>
            <person name="Rabinowicz A."/>
            <person name="Bohlega S."/>
            <person name="Bailey J."/>
            <person name="Alonso M.E."/>
            <person name="Rasmussen A."/>
            <person name="Thomson A.E."/>
            <person name="Ochoa A."/>
            <person name="Prado A.J."/>
            <person name="Medina M.T."/>
            <person name="Yamakawa K."/>
        </authorList>
    </citation>
    <scope>VARIANTS MELF1 PRO-25; CYS-108; HIS-171 AND LEU-293</scope>
    <scope>CHARACTERIZATION OF VARIANTS MELF1 GLY-32; CYS-108; ILE-194; SER-279 AND ASN-294</scope>
</reference>
<reference key="38">
    <citation type="journal article" date="2003" name="J. Hum. Genet.">
        <title>Two novel mutations in the EPM2A gene in a Korean patient with Lafora's progressive myoclonus epilepsy.</title>
        <authorList>
            <person name="Ki C.S."/>
            <person name="Kong S.Y."/>
            <person name="Seo D.W."/>
            <person name="Hong S.B."/>
            <person name="Kim H.J."/>
            <person name="Kim J.W."/>
        </authorList>
    </citation>
    <scope>VARIANT MELF1 ALA-187</scope>
</reference>
<reference key="39">
    <citation type="journal article" date="2004" name="Epilepsia">
        <title>A novel exon 1 mutation in a patient with atypical Lafora progressive myoclonus epilepsy seen as childhood-onset cognitive deficit.</title>
        <authorList>
            <person name="Annesi G."/>
            <person name="Sofia V."/>
            <person name="Gambardella A."/>
            <person name="Ciro Candiano I.C."/>
            <person name="Spadafora P."/>
            <person name="Annesi F."/>
            <person name="Cutuli N."/>
            <person name="De Marco E.V."/>
            <person name="Civitelli D."/>
            <person name="Carrideo S."/>
            <person name="Tarantino P."/>
            <person name="Barone R."/>
            <person name="Zappia M."/>
            <person name="Quattrone A."/>
        </authorList>
    </citation>
    <scope>VARIANT MELF1 PRO-91</scope>
</reference>
<reference key="40">
    <citation type="journal article" date="2004" name="Hum. Mutat.">
        <title>Loss of function of the cytoplasmic isoform of the protein laforin (EPM2A) causes Lafora progressive myoclonus epilepsy.</title>
        <authorList>
            <person name="Ianzano L."/>
            <person name="Young E.J."/>
            <person name="Zhao X.C."/>
            <person name="Chan E.M."/>
            <person name="Rodriguez M.T."/>
            <person name="Torrado M.V."/>
            <person name="Scherer S.W."/>
            <person name="Minassian B.A."/>
        </authorList>
    </citation>
    <scope>VARIANTS MELF1 PRO-91; HIS-171 AND SER-279</scope>
    <scope>CATALYTIC ACTIVITY</scope>
    <scope>SUBCELLULAR LOCATION</scope>
</reference>
<reference key="41">
    <citation type="journal article" date="2005" name="J. Hum. Genet.">
        <title>Mutations in the NHLRC1 gene are the common cause for Lafora disease in the Japanese population.</title>
        <authorList>
            <person name="Singh S."/>
            <person name="Suzuki T."/>
            <person name="Uchiyama A."/>
            <person name="Kumada S."/>
            <person name="Moriyama N."/>
            <person name="Hirose S."/>
            <person name="Takahashi Y."/>
            <person name="Sugie H."/>
            <person name="Mizoguchi K."/>
            <person name="Inoue Y."/>
            <person name="Kimura K."/>
            <person name="Sawaishi Y."/>
            <person name="Yamakawa K."/>
            <person name="Ganesh S."/>
        </authorList>
    </citation>
    <scope>VARIANT PRO-46</scope>
</reference>
<reference key="42">
    <citation type="journal article" date="2008" name="Hum. Mutat.">
        <title>Lafora disease in the Indian population: EPM2A and NHLRC1 gene mutations and their impact on subcellular localization of laforin and malin.</title>
        <authorList>
            <person name="Singh S."/>
            <person name="Satishchandra P."/>
            <person name="Shankar S.K."/>
            <person name="Ganesh S."/>
        </authorList>
    </citation>
    <scope>VARIANTS MELF1 ASN-140; TYR-148; LYS-210 AND TRP-310</scope>
    <scope>CHARACTERIZATION OF VARIANT MELF1 TRP-310</scope>
    <scope>SUBCELLULAR LOCATION</scope>
</reference>
<dbReference type="EC" id="3.1.3.-" evidence="22 35 36 37 38"/>
<dbReference type="EC" id="3.1.3.16" evidence="54"/>
<dbReference type="EC" id="3.1.3.48" evidence="5 7"/>
<dbReference type="EMBL" id="AF084535">
    <property type="protein sequence ID" value="AAC83347.2"/>
    <property type="molecule type" value="mRNA"/>
</dbReference>
<dbReference type="EMBL" id="AF284580">
    <property type="protein sequence ID" value="AAG18377.1"/>
    <property type="molecule type" value="mRNA"/>
</dbReference>
<dbReference type="EMBL" id="AF454491">
    <property type="protein sequence ID" value="AAO15523.1"/>
    <property type="status" value="ALT_SEQ"/>
    <property type="molecule type" value="mRNA"/>
</dbReference>
<dbReference type="EMBL" id="AF454492">
    <property type="protein sequence ID" value="AAO15524.1"/>
    <property type="molecule type" value="mRNA"/>
</dbReference>
<dbReference type="EMBL" id="AF454493">
    <property type="protein sequence ID" value="AAO15525.1"/>
    <property type="molecule type" value="mRNA"/>
</dbReference>
<dbReference type="EMBL" id="AF454494">
    <property type="protein sequence ID" value="AAO15526.1"/>
    <property type="molecule type" value="mRNA"/>
</dbReference>
<dbReference type="EMBL" id="AK022721">
    <property type="protein sequence ID" value="BAG51107.1"/>
    <property type="status" value="ALT_FRAME"/>
    <property type="molecule type" value="mRNA"/>
</dbReference>
<dbReference type="EMBL" id="AK299497">
    <property type="protein sequence ID" value="BAG61454.1"/>
    <property type="molecule type" value="mRNA"/>
</dbReference>
<dbReference type="EMBL" id="AL023806">
    <property type="status" value="NOT_ANNOTATED_CDS"/>
    <property type="molecule type" value="Genomic_DNA"/>
</dbReference>
<dbReference type="EMBL" id="AL365193">
    <property type="status" value="NOT_ANNOTATED_CDS"/>
    <property type="molecule type" value="Genomic_DNA"/>
</dbReference>
<dbReference type="EMBL" id="CH471051">
    <property type="protein sequence ID" value="EAW47844.1"/>
    <property type="molecule type" value="Genomic_DNA"/>
</dbReference>
<dbReference type="EMBL" id="BC005286">
    <property type="protein sequence ID" value="AAH05286.1"/>
    <property type="molecule type" value="mRNA"/>
</dbReference>
<dbReference type="EMBL" id="BC070047">
    <property type="protein sequence ID" value="AAH70047.1"/>
    <property type="molecule type" value="mRNA"/>
</dbReference>
<dbReference type="EMBL" id="AJ130763">
    <property type="protein sequence ID" value="CAA10199.1"/>
    <property type="molecule type" value="mRNA"/>
</dbReference>
<dbReference type="EMBL" id="AJ130764">
    <property type="protein sequence ID" value="CAA10200.1"/>
    <property type="molecule type" value="mRNA"/>
</dbReference>
<dbReference type="CCDS" id="CCDS5206.1">
    <molecule id="O95278-1"/>
</dbReference>
<dbReference type="CCDS" id="CCDS87452.1">
    <molecule id="O95278-8"/>
</dbReference>
<dbReference type="CCDS" id="CCDS87453.1">
    <molecule id="O95278-5"/>
</dbReference>
<dbReference type="CCDS" id="CCDS87454.1">
    <molecule id="O95278-2"/>
</dbReference>
<dbReference type="RefSeq" id="NP_001018051.1">
    <molecule id="O95278-2"/>
    <property type="nucleotide sequence ID" value="NM_001018041.2"/>
</dbReference>
<dbReference type="RefSeq" id="NP_001346986.1">
    <molecule id="O95278-5"/>
    <property type="nucleotide sequence ID" value="NM_001360057.2"/>
</dbReference>
<dbReference type="RefSeq" id="NP_001346993.1">
    <molecule id="O95278-8"/>
    <property type="nucleotide sequence ID" value="NM_001360064.2"/>
</dbReference>
<dbReference type="RefSeq" id="NP_001347000.1">
    <molecule id="O95278-8"/>
    <property type="nucleotide sequence ID" value="NM_001360071.2"/>
</dbReference>
<dbReference type="RefSeq" id="NP_001355058.1">
    <molecule id="O95278-7"/>
    <property type="nucleotide sequence ID" value="NM_001368129.2"/>
</dbReference>
<dbReference type="RefSeq" id="NP_001355060.1">
    <molecule id="O95278-8"/>
    <property type="nucleotide sequence ID" value="NM_001368131.1"/>
</dbReference>
<dbReference type="RefSeq" id="NP_001355061.1">
    <molecule id="O95278-7"/>
    <property type="nucleotide sequence ID" value="NM_001368132.1"/>
</dbReference>
<dbReference type="RefSeq" id="NP_005661.1">
    <molecule id="O95278-1"/>
    <property type="nucleotide sequence ID" value="NM_005670.4"/>
</dbReference>
<dbReference type="RefSeq" id="XP_006715627.1">
    <property type="nucleotide sequence ID" value="XM_006715564.3"/>
</dbReference>
<dbReference type="RefSeq" id="XP_011534418.1">
    <molecule id="O95278-8"/>
    <property type="nucleotide sequence ID" value="XM_011536116.2"/>
</dbReference>
<dbReference type="RefSeq" id="XP_016866789.1">
    <property type="nucleotide sequence ID" value="XM_017011300.1"/>
</dbReference>
<dbReference type="RefSeq" id="XP_016866790.1">
    <property type="nucleotide sequence ID" value="XM_017011301.1"/>
</dbReference>
<dbReference type="RefSeq" id="XP_016866791.1">
    <molecule id="O95278-7"/>
    <property type="nucleotide sequence ID" value="XM_017011302.2"/>
</dbReference>
<dbReference type="RefSeq" id="XP_024302319.1">
    <molecule id="O95278-8"/>
    <property type="nucleotide sequence ID" value="XM_024446551.2"/>
</dbReference>
<dbReference type="RefSeq" id="XP_047275320.1">
    <molecule id="O95278-7"/>
    <property type="nucleotide sequence ID" value="XM_047419364.1"/>
</dbReference>
<dbReference type="RefSeq" id="XP_054212398.1">
    <molecule id="O95278-1"/>
    <property type="nucleotide sequence ID" value="XM_054356423.1"/>
</dbReference>
<dbReference type="RefSeq" id="XP_054212402.1">
    <molecule id="O95278-8"/>
    <property type="nucleotide sequence ID" value="XM_054356427.1"/>
</dbReference>
<dbReference type="RefSeq" id="XP_054212403.1">
    <molecule id="O95278-8"/>
    <property type="nucleotide sequence ID" value="XM_054356428.1"/>
</dbReference>
<dbReference type="RefSeq" id="XP_054212404.1">
    <molecule id="O95278-7"/>
    <property type="nucleotide sequence ID" value="XM_054356429.1"/>
</dbReference>
<dbReference type="RefSeq" id="XP_054212405.1">
    <molecule id="O95278-7"/>
    <property type="nucleotide sequence ID" value="XM_054356430.1"/>
</dbReference>
<dbReference type="PDB" id="4R30">
    <property type="method" value="X-ray"/>
    <property type="resolution" value="2.30 A"/>
    <property type="chains" value="A/B/C/D=148-331"/>
</dbReference>
<dbReference type="PDB" id="4RKK">
    <property type="method" value="X-ray"/>
    <property type="resolution" value="2.40 A"/>
    <property type="chains" value="A/C=1-329"/>
</dbReference>
<dbReference type="PDBsum" id="4R30"/>
<dbReference type="PDBsum" id="4RKK"/>
<dbReference type="SMR" id="O95278"/>
<dbReference type="BioGRID" id="113679">
    <property type="interactions" value="54"/>
</dbReference>
<dbReference type="CORUM" id="O95278"/>
<dbReference type="IntAct" id="O95278">
    <property type="interactions" value="10"/>
</dbReference>
<dbReference type="STRING" id="9606.ENSP00000356489"/>
<dbReference type="BindingDB" id="O95278"/>
<dbReference type="ChEMBL" id="CHEMBL2311242"/>
<dbReference type="CAZy" id="CBM20">
    <property type="family name" value="Carbohydrate-Binding Module Family 20"/>
</dbReference>
<dbReference type="DEPOD" id="EPM2A"/>
<dbReference type="iPTMnet" id="O95278"/>
<dbReference type="PhosphoSitePlus" id="O95278"/>
<dbReference type="BioMuta" id="EPM2A"/>
<dbReference type="MassIVE" id="O95278"/>
<dbReference type="PaxDb" id="9606-ENSP00000356489"/>
<dbReference type="PeptideAtlas" id="O95278"/>
<dbReference type="ProteomicsDB" id="50779">
    <molecule id="O95278-1"/>
</dbReference>
<dbReference type="ProteomicsDB" id="50780">
    <molecule id="O95278-2"/>
</dbReference>
<dbReference type="ProteomicsDB" id="50782">
    <molecule id="O95278-4"/>
</dbReference>
<dbReference type="ProteomicsDB" id="50783">
    <molecule id="O95278-5"/>
</dbReference>
<dbReference type="ProteomicsDB" id="50784">
    <molecule id="O95278-6"/>
</dbReference>
<dbReference type="ProteomicsDB" id="50785">
    <molecule id="O95278-7"/>
</dbReference>
<dbReference type="ProteomicsDB" id="50786">
    <molecule id="O95278-8"/>
</dbReference>
<dbReference type="Pumba" id="O95278"/>
<dbReference type="ABCD" id="O95278">
    <property type="antibodies" value="1 sequenced antibody"/>
</dbReference>
<dbReference type="Antibodypedia" id="19839">
    <property type="antibodies" value="534 antibodies from 38 providers"/>
</dbReference>
<dbReference type="DNASU" id="7957"/>
<dbReference type="Ensembl" id="ENST00000367519.9">
    <molecule id="O95278-1"/>
    <property type="protein sequence ID" value="ENSP00000356489.3"/>
    <property type="gene ID" value="ENSG00000112425.16"/>
</dbReference>
<dbReference type="Ensembl" id="ENST00000435470.2">
    <molecule id="O95278-2"/>
    <property type="protein sequence ID" value="ENSP00000405913.2"/>
    <property type="gene ID" value="ENSG00000112425.16"/>
</dbReference>
<dbReference type="Ensembl" id="ENST00000611340.5">
    <molecule id="O95278-8"/>
    <property type="protein sequence ID" value="ENSP00000480268.1"/>
    <property type="gene ID" value="ENSG00000112425.16"/>
</dbReference>
<dbReference type="Ensembl" id="ENST00000638262.1">
    <molecule id="O95278-5"/>
    <property type="protein sequence ID" value="ENSP00000492876.1"/>
    <property type="gene ID" value="ENSG00000112425.16"/>
</dbReference>
<dbReference type="Ensembl" id="ENST00000638778.1">
    <molecule id="O95278-8"/>
    <property type="protein sequence ID" value="ENSP00000491353.1"/>
    <property type="gene ID" value="ENSG00000112425.16"/>
</dbReference>
<dbReference type="Ensembl" id="ENST00000638783.1">
    <molecule id="O95278-8"/>
    <property type="protein sequence ID" value="ENSP00000491338.1"/>
    <property type="gene ID" value="ENSG00000112425.16"/>
</dbReference>
<dbReference type="Ensembl" id="ENST00000639423.1">
    <molecule id="O95278-8"/>
    <property type="protein sequence ID" value="ENSP00000492701.1"/>
    <property type="gene ID" value="ENSG00000112425.16"/>
</dbReference>
<dbReference type="Ensembl" id="ENST00000639465.1">
    <molecule id="O95278-8"/>
    <property type="protein sequence ID" value="ENSP00000491180.1"/>
    <property type="gene ID" value="ENSG00000112425.16"/>
</dbReference>
<dbReference type="GeneID" id="7957"/>
<dbReference type="KEGG" id="hsa:7957"/>
<dbReference type="MANE-Select" id="ENST00000367519.9">
    <property type="protein sequence ID" value="ENSP00000356489.3"/>
    <property type="RefSeq nucleotide sequence ID" value="NM_005670.4"/>
    <property type="RefSeq protein sequence ID" value="NP_005661.1"/>
</dbReference>
<dbReference type="UCSC" id="uc003qkw.4">
    <molecule id="O95278-1"/>
    <property type="organism name" value="human"/>
</dbReference>
<dbReference type="AGR" id="HGNC:3413"/>
<dbReference type="CTD" id="7957"/>
<dbReference type="DisGeNET" id="7957"/>
<dbReference type="GeneCards" id="EPM2A"/>
<dbReference type="GeneReviews" id="EPM2A"/>
<dbReference type="HGNC" id="HGNC:3413">
    <property type="gene designation" value="EPM2A"/>
</dbReference>
<dbReference type="HPA" id="ENSG00000112425">
    <property type="expression patterns" value="Tissue enhanced (skeletal muscle, tongue)"/>
</dbReference>
<dbReference type="MalaCards" id="EPM2A"/>
<dbReference type="MIM" id="254780">
    <property type="type" value="phenotype"/>
</dbReference>
<dbReference type="MIM" id="607566">
    <property type="type" value="gene"/>
</dbReference>
<dbReference type="neXtProt" id="NX_O95278"/>
<dbReference type="OpenTargets" id="ENSG00000112425"/>
<dbReference type="Orphanet" id="501">
    <property type="disease" value="Lafora disease"/>
</dbReference>
<dbReference type="PharmGKB" id="PA27832"/>
<dbReference type="VEuPathDB" id="HostDB:ENSG00000112425"/>
<dbReference type="eggNOG" id="KOG1716">
    <property type="taxonomic scope" value="Eukaryota"/>
</dbReference>
<dbReference type="GeneTree" id="ENSGT00390000010101"/>
<dbReference type="HOGENOM" id="CLU_076792_0_0_1"/>
<dbReference type="OMA" id="EMRHTTN"/>
<dbReference type="OrthoDB" id="273181at2759"/>
<dbReference type="PhylomeDB" id="O95278"/>
<dbReference type="TreeFam" id="TF332841"/>
<dbReference type="BRENDA" id="3.1.3.16">
    <property type="organism ID" value="2681"/>
</dbReference>
<dbReference type="PathwayCommons" id="O95278"/>
<dbReference type="Reactome" id="R-HSA-3322077">
    <property type="pathway name" value="Glycogen synthesis"/>
</dbReference>
<dbReference type="Reactome" id="R-HSA-3785653">
    <property type="pathway name" value="Myoclonic epilepsy of Lafora"/>
</dbReference>
<dbReference type="SignaLink" id="O95278"/>
<dbReference type="SIGNOR" id="O95278"/>
<dbReference type="BioGRID-ORCS" id="7957">
    <property type="hits" value="10 hits in 1166 CRISPR screens"/>
</dbReference>
<dbReference type="ChiTaRS" id="EPM2A">
    <property type="organism name" value="human"/>
</dbReference>
<dbReference type="EvolutionaryTrace" id="O95278"/>
<dbReference type="GenomeRNAi" id="7957"/>
<dbReference type="Pharos" id="O95278">
    <property type="development level" value="Tbio"/>
</dbReference>
<dbReference type="Proteomes" id="UP000005640">
    <property type="component" value="Chromosome 6"/>
</dbReference>
<dbReference type="Bgee" id="ENSG00000112425">
    <property type="expression patterns" value="Expressed in skeletal muscle tissue of rectus abdominis and 204 other cell types or tissues"/>
</dbReference>
<dbReference type="ExpressionAtlas" id="O95278">
    <property type="expression patterns" value="baseline and differential"/>
</dbReference>
<dbReference type="GO" id="GO:0005737">
    <property type="term" value="C:cytoplasm"/>
    <property type="evidence" value="ECO:0000314"/>
    <property type="project" value="UniProtKB"/>
</dbReference>
<dbReference type="GO" id="GO:0098556">
    <property type="term" value="C:cytoplasmic side of rough endoplasmic reticulum membrane"/>
    <property type="evidence" value="ECO:0000314"/>
    <property type="project" value="UniProtKB"/>
</dbReference>
<dbReference type="GO" id="GO:0005829">
    <property type="term" value="C:cytosol"/>
    <property type="evidence" value="ECO:0000314"/>
    <property type="project" value="UniProtKB"/>
</dbReference>
<dbReference type="GO" id="GO:0030425">
    <property type="term" value="C:dendrite"/>
    <property type="evidence" value="ECO:0007669"/>
    <property type="project" value="Ensembl"/>
</dbReference>
<dbReference type="GO" id="GO:0005654">
    <property type="term" value="C:nucleoplasm"/>
    <property type="evidence" value="ECO:0000314"/>
    <property type="project" value="HPA"/>
</dbReference>
<dbReference type="GO" id="GO:0005634">
    <property type="term" value="C:nucleus"/>
    <property type="evidence" value="ECO:0000314"/>
    <property type="project" value="UniProtKB"/>
</dbReference>
<dbReference type="GO" id="GO:0043204">
    <property type="term" value="C:perikaryon"/>
    <property type="evidence" value="ECO:0007669"/>
    <property type="project" value="Ensembl"/>
</dbReference>
<dbReference type="GO" id="GO:0005886">
    <property type="term" value="C:plasma membrane"/>
    <property type="evidence" value="ECO:0007669"/>
    <property type="project" value="UniProtKB-SubCell"/>
</dbReference>
<dbReference type="GO" id="GO:0004373">
    <property type="term" value="F:alpha-1,4-glucan glucosyltransferase (UDP-glucose donor) activity"/>
    <property type="evidence" value="ECO:0007669"/>
    <property type="project" value="Ensembl"/>
</dbReference>
<dbReference type="GO" id="GO:0030246">
    <property type="term" value="F:carbohydrate binding"/>
    <property type="evidence" value="ECO:0000314"/>
    <property type="project" value="UniProtKB"/>
</dbReference>
<dbReference type="GO" id="GO:0019203">
    <property type="term" value="F:carbohydrate phosphatase activity"/>
    <property type="evidence" value="ECO:0000314"/>
    <property type="project" value="UniProtKB"/>
</dbReference>
<dbReference type="GO" id="GO:2001069">
    <property type="term" value="F:glycogen binding"/>
    <property type="evidence" value="ECO:0000314"/>
    <property type="project" value="UniProtKB"/>
</dbReference>
<dbReference type="GO" id="GO:0016791">
    <property type="term" value="F:phosphatase activity"/>
    <property type="evidence" value="ECO:0000314"/>
    <property type="project" value="UniProtKB"/>
</dbReference>
<dbReference type="GO" id="GO:0046983">
    <property type="term" value="F:protein dimerization activity"/>
    <property type="evidence" value="ECO:0000353"/>
    <property type="project" value="UniProtKB"/>
</dbReference>
<dbReference type="GO" id="GO:0042803">
    <property type="term" value="F:protein homodimerization activity"/>
    <property type="evidence" value="ECO:0000353"/>
    <property type="project" value="UniProtKB"/>
</dbReference>
<dbReference type="GO" id="GO:0004722">
    <property type="term" value="F:protein serine/threonine phosphatase activity"/>
    <property type="evidence" value="ECO:0000314"/>
    <property type="project" value="UniProtKB"/>
</dbReference>
<dbReference type="GO" id="GO:0004725">
    <property type="term" value="F:protein tyrosine phosphatase activity"/>
    <property type="evidence" value="ECO:0000314"/>
    <property type="project" value="UniProtKB"/>
</dbReference>
<dbReference type="GO" id="GO:2001070">
    <property type="term" value="F:starch binding"/>
    <property type="evidence" value="ECO:0007669"/>
    <property type="project" value="Ensembl"/>
</dbReference>
<dbReference type="GO" id="GO:0000045">
    <property type="term" value="P:autophagosome assembly"/>
    <property type="evidence" value="ECO:0007669"/>
    <property type="project" value="Ensembl"/>
</dbReference>
<dbReference type="GO" id="GO:0006816">
    <property type="term" value="P:calcium ion transport"/>
    <property type="evidence" value="ECO:0007669"/>
    <property type="project" value="Ensembl"/>
</dbReference>
<dbReference type="GO" id="GO:0046835">
    <property type="term" value="P:carbohydrate phosphorylation"/>
    <property type="evidence" value="ECO:0007669"/>
    <property type="project" value="Ensembl"/>
</dbReference>
<dbReference type="GO" id="GO:0016311">
    <property type="term" value="P:dephosphorylation"/>
    <property type="evidence" value="ECO:0000314"/>
    <property type="project" value="UniProtKB"/>
</dbReference>
<dbReference type="GO" id="GO:0014009">
    <property type="term" value="P:glial cell proliferation"/>
    <property type="evidence" value="ECO:0007669"/>
    <property type="project" value="Ensembl"/>
</dbReference>
<dbReference type="GO" id="GO:0005978">
    <property type="term" value="P:glycogen biosynthetic process"/>
    <property type="evidence" value="ECO:0000304"/>
    <property type="project" value="Reactome"/>
</dbReference>
<dbReference type="GO" id="GO:0005977">
    <property type="term" value="P:glycogen metabolic process"/>
    <property type="evidence" value="ECO:0000315"/>
    <property type="project" value="UniProtKB"/>
</dbReference>
<dbReference type="GO" id="GO:0046959">
    <property type="term" value="P:habituation"/>
    <property type="evidence" value="ECO:0007669"/>
    <property type="project" value="Ensembl"/>
</dbReference>
<dbReference type="GO" id="GO:0015813">
    <property type="term" value="P:L-glutamate transmembrane transport"/>
    <property type="evidence" value="ECO:0007669"/>
    <property type="project" value="Ensembl"/>
</dbReference>
<dbReference type="GO" id="GO:0007005">
    <property type="term" value="P:mitochondrion organization"/>
    <property type="evidence" value="ECO:0007669"/>
    <property type="project" value="Ensembl"/>
</dbReference>
<dbReference type="GO" id="GO:0045786">
    <property type="term" value="P:negative regulation of cell cycle"/>
    <property type="evidence" value="ECO:0007669"/>
    <property type="project" value="Ensembl"/>
</dbReference>
<dbReference type="GO" id="GO:0035305">
    <property type="term" value="P:negative regulation of dephosphorylation"/>
    <property type="evidence" value="ECO:0000314"/>
    <property type="project" value="UniProtKB"/>
</dbReference>
<dbReference type="GO" id="GO:0010629">
    <property type="term" value="P:negative regulation of gene expression"/>
    <property type="evidence" value="ECO:0007669"/>
    <property type="project" value="Ensembl"/>
</dbReference>
<dbReference type="GO" id="GO:0010923">
    <property type="term" value="P:negative regulation of phosphatase activity"/>
    <property type="evidence" value="ECO:0000314"/>
    <property type="project" value="UniProtKB"/>
</dbReference>
<dbReference type="GO" id="GO:0035335">
    <property type="term" value="P:peptidyl-tyrosine dephosphorylation"/>
    <property type="evidence" value="ECO:0000315"/>
    <property type="project" value="UniProtKB"/>
</dbReference>
<dbReference type="GO" id="GO:0016239">
    <property type="term" value="P:positive regulation of macroautophagy"/>
    <property type="evidence" value="ECO:0007669"/>
    <property type="project" value="Ensembl"/>
</dbReference>
<dbReference type="GO" id="GO:0043161">
    <property type="term" value="P:proteasome-mediated ubiquitin-dependent protein catabolic process"/>
    <property type="evidence" value="ECO:0007669"/>
    <property type="project" value="Ensembl"/>
</dbReference>
<dbReference type="GO" id="GO:0006470">
    <property type="term" value="P:protein dephosphorylation"/>
    <property type="evidence" value="ECO:0000314"/>
    <property type="project" value="UniProtKB"/>
</dbReference>
<dbReference type="GO" id="GO:0001558">
    <property type="term" value="P:regulation of cell growth"/>
    <property type="evidence" value="ECO:0007669"/>
    <property type="project" value="Ensembl"/>
</dbReference>
<dbReference type="GO" id="GO:0061136">
    <property type="term" value="P:regulation of proteasomal protein catabolic process"/>
    <property type="evidence" value="ECO:0007669"/>
    <property type="project" value="Ensembl"/>
</dbReference>
<dbReference type="GO" id="GO:0042306">
    <property type="term" value="P:regulation of protein import into nucleus"/>
    <property type="evidence" value="ECO:0007669"/>
    <property type="project" value="Ensembl"/>
</dbReference>
<dbReference type="GO" id="GO:1903076">
    <property type="term" value="P:regulation of protein localization to plasma membrane"/>
    <property type="evidence" value="ECO:0007669"/>
    <property type="project" value="Ensembl"/>
</dbReference>
<dbReference type="GO" id="GO:0031396">
    <property type="term" value="P:regulation of protein ubiquitination"/>
    <property type="evidence" value="ECO:0007669"/>
    <property type="project" value="Ensembl"/>
</dbReference>
<dbReference type="GO" id="GO:0016055">
    <property type="term" value="P:Wnt signaling pathway"/>
    <property type="evidence" value="ECO:0007669"/>
    <property type="project" value="Ensembl"/>
</dbReference>
<dbReference type="CDD" id="cd05806">
    <property type="entry name" value="CBM20_laforin"/>
    <property type="match status" value="1"/>
</dbReference>
<dbReference type="CDD" id="cd14526">
    <property type="entry name" value="DSP_laforin-like"/>
    <property type="match status" value="1"/>
</dbReference>
<dbReference type="DisProt" id="DP02647"/>
<dbReference type="FunFam" id="2.60.40.10:FF:001039">
    <property type="entry name" value="laforin isoform X1"/>
    <property type="match status" value="1"/>
</dbReference>
<dbReference type="FunFam" id="3.90.190.10:FF:000054">
    <property type="entry name" value="laforin isoform X1"/>
    <property type="match status" value="1"/>
</dbReference>
<dbReference type="Gene3D" id="2.60.40.10">
    <property type="entry name" value="Immunoglobulins"/>
    <property type="match status" value="1"/>
</dbReference>
<dbReference type="Gene3D" id="3.90.190.10">
    <property type="entry name" value="Protein tyrosine phosphatase superfamily"/>
    <property type="match status" value="1"/>
</dbReference>
<dbReference type="InterPro" id="IPR013784">
    <property type="entry name" value="Carb-bd-like_fold"/>
</dbReference>
<dbReference type="InterPro" id="IPR002044">
    <property type="entry name" value="CBM20"/>
</dbReference>
<dbReference type="InterPro" id="IPR034831">
    <property type="entry name" value="CBM20_laforin"/>
</dbReference>
<dbReference type="InterPro" id="IPR045204">
    <property type="entry name" value="DSP_laforin-like"/>
</dbReference>
<dbReference type="InterPro" id="IPR000340">
    <property type="entry name" value="Dual-sp_phosphatase_cat-dom"/>
</dbReference>
<dbReference type="InterPro" id="IPR013783">
    <property type="entry name" value="Ig-like_fold"/>
</dbReference>
<dbReference type="InterPro" id="IPR042942">
    <property type="entry name" value="Laforin"/>
</dbReference>
<dbReference type="InterPro" id="IPR029021">
    <property type="entry name" value="Prot-tyrosine_phosphatase-like"/>
</dbReference>
<dbReference type="InterPro" id="IPR016130">
    <property type="entry name" value="Tyr_Pase_AS"/>
</dbReference>
<dbReference type="InterPro" id="IPR000387">
    <property type="entry name" value="Tyr_Pase_dom"/>
</dbReference>
<dbReference type="InterPro" id="IPR020422">
    <property type="entry name" value="TYR_PHOSPHATASE_DUAL_dom"/>
</dbReference>
<dbReference type="PANTHER" id="PTHR46864">
    <property type="entry name" value="LAFORIN"/>
    <property type="match status" value="1"/>
</dbReference>
<dbReference type="PANTHER" id="PTHR46864:SF1">
    <property type="entry name" value="LAFORIN"/>
    <property type="match status" value="1"/>
</dbReference>
<dbReference type="Pfam" id="PF00686">
    <property type="entry name" value="CBM_20"/>
    <property type="match status" value="1"/>
</dbReference>
<dbReference type="Pfam" id="PF00782">
    <property type="entry name" value="DSPc"/>
    <property type="match status" value="1"/>
</dbReference>
<dbReference type="SMART" id="SM01065">
    <property type="entry name" value="CBM_2"/>
    <property type="match status" value="1"/>
</dbReference>
<dbReference type="SMART" id="SM00195">
    <property type="entry name" value="DSPc"/>
    <property type="match status" value="1"/>
</dbReference>
<dbReference type="SUPFAM" id="SSF52799">
    <property type="entry name" value="(Phosphotyrosine protein) phosphatases II"/>
    <property type="match status" value="1"/>
</dbReference>
<dbReference type="SUPFAM" id="SSF49452">
    <property type="entry name" value="Starch-binding domain-like"/>
    <property type="match status" value="1"/>
</dbReference>
<dbReference type="PROSITE" id="PS51166">
    <property type="entry name" value="CBM20"/>
    <property type="match status" value="1"/>
</dbReference>
<dbReference type="PROSITE" id="PS00383">
    <property type="entry name" value="TYR_PHOSPHATASE_1"/>
    <property type="match status" value="1"/>
</dbReference>
<dbReference type="PROSITE" id="PS50056">
    <property type="entry name" value="TYR_PHOSPHATASE_2"/>
    <property type="match status" value="1"/>
</dbReference>
<dbReference type="PROSITE" id="PS50054">
    <property type="entry name" value="TYR_PHOSPHATASE_DUAL"/>
    <property type="match status" value="1"/>
</dbReference>